<gene>
    <name type="primary">CRK</name>
</gene>
<reference key="1">
    <citation type="journal article" date="1992" name="Mol. Cell. Biol.">
        <title>Two species of human CRK cDNA encode proteins with distinct biological activities.</title>
        <authorList>
            <person name="Matsuda M."/>
            <person name="Tanaka S."/>
            <person name="Nagata S."/>
            <person name="Kojima A."/>
            <person name="Kurata T."/>
            <person name="Shibuya M."/>
        </authorList>
    </citation>
    <scope>NUCLEOTIDE SEQUENCE [MRNA] (ISOFORM CRK-II)</scope>
    <scope>FUNCTION (ISOFORM CRK-II)</scope>
    <scope>ALTERNATIVE SPLICING</scope>
    <source>
        <tissue>Embryonic lung</tissue>
        <tissue>Placenta</tissue>
    </source>
</reference>
<reference key="2">
    <citation type="journal article" date="1993" name="Oncogene">
        <title>CRK proto-oncogene maps to human chromosome band 17p13.</title>
        <authorList>
            <person name="Fioretos T."/>
            <person name="Heisterkamp N."/>
            <person name="Groffen J."/>
            <person name="Benjes S."/>
            <person name="Morris C."/>
        </authorList>
    </citation>
    <scope>NUCLEOTIDE SEQUENCE [GENOMIC DNA]</scope>
</reference>
<reference key="3">
    <citation type="submission" date="2003-05" db="EMBL/GenBank/DDBJ databases">
        <title>Cloning of human full-length CDSs in BD Creator(TM) system donor vector.</title>
        <authorList>
            <person name="Kalnine N."/>
            <person name="Chen X."/>
            <person name="Rolfs A."/>
            <person name="Halleck A."/>
            <person name="Hines L."/>
            <person name="Eisenstein S."/>
            <person name="Koundinya M."/>
            <person name="Raphael J."/>
            <person name="Moreira D."/>
            <person name="Kelley T."/>
            <person name="LaBaer J."/>
            <person name="Lin Y."/>
            <person name="Phelan M."/>
            <person name="Farmer A."/>
        </authorList>
    </citation>
    <scope>NUCLEOTIDE SEQUENCE [LARGE SCALE MRNA] (ISOFORM CRK-II)</scope>
</reference>
<reference key="4">
    <citation type="submission" date="2007-12" db="EMBL/GenBank/DDBJ databases">
        <authorList>
            <consortium name="SeattleSNPs variation discovery resource"/>
        </authorList>
    </citation>
    <scope>NUCLEOTIDE SEQUENCE [GENOMIC DNA]</scope>
</reference>
<reference key="5">
    <citation type="journal article" date="2004" name="Nat. Genet.">
        <title>Complete sequencing and characterization of 21,243 full-length human cDNAs.</title>
        <authorList>
            <person name="Ota T."/>
            <person name="Suzuki Y."/>
            <person name="Nishikawa T."/>
            <person name="Otsuki T."/>
            <person name="Sugiyama T."/>
            <person name="Irie R."/>
            <person name="Wakamatsu A."/>
            <person name="Hayashi K."/>
            <person name="Sato H."/>
            <person name="Nagai K."/>
            <person name="Kimura K."/>
            <person name="Makita H."/>
            <person name="Sekine M."/>
            <person name="Obayashi M."/>
            <person name="Nishi T."/>
            <person name="Shibahara T."/>
            <person name="Tanaka T."/>
            <person name="Ishii S."/>
            <person name="Yamamoto J."/>
            <person name="Saito K."/>
            <person name="Kawai Y."/>
            <person name="Isono Y."/>
            <person name="Nakamura Y."/>
            <person name="Nagahari K."/>
            <person name="Murakami K."/>
            <person name="Yasuda T."/>
            <person name="Iwayanagi T."/>
            <person name="Wagatsuma M."/>
            <person name="Shiratori A."/>
            <person name="Sudo H."/>
            <person name="Hosoiri T."/>
            <person name="Kaku Y."/>
            <person name="Kodaira H."/>
            <person name="Kondo H."/>
            <person name="Sugawara M."/>
            <person name="Takahashi M."/>
            <person name="Kanda K."/>
            <person name="Yokoi T."/>
            <person name="Furuya T."/>
            <person name="Kikkawa E."/>
            <person name="Omura Y."/>
            <person name="Abe K."/>
            <person name="Kamihara K."/>
            <person name="Katsuta N."/>
            <person name="Sato K."/>
            <person name="Tanikawa M."/>
            <person name="Yamazaki M."/>
            <person name="Ninomiya K."/>
            <person name="Ishibashi T."/>
            <person name="Yamashita H."/>
            <person name="Murakawa K."/>
            <person name="Fujimori K."/>
            <person name="Tanai H."/>
            <person name="Kimata M."/>
            <person name="Watanabe M."/>
            <person name="Hiraoka S."/>
            <person name="Chiba Y."/>
            <person name="Ishida S."/>
            <person name="Ono Y."/>
            <person name="Takiguchi S."/>
            <person name="Watanabe S."/>
            <person name="Yosida M."/>
            <person name="Hotuta T."/>
            <person name="Kusano J."/>
            <person name="Kanehori K."/>
            <person name="Takahashi-Fujii A."/>
            <person name="Hara H."/>
            <person name="Tanase T.-O."/>
            <person name="Nomura Y."/>
            <person name="Togiya S."/>
            <person name="Komai F."/>
            <person name="Hara R."/>
            <person name="Takeuchi K."/>
            <person name="Arita M."/>
            <person name="Imose N."/>
            <person name="Musashino K."/>
            <person name="Yuuki H."/>
            <person name="Oshima A."/>
            <person name="Sasaki N."/>
            <person name="Aotsuka S."/>
            <person name="Yoshikawa Y."/>
            <person name="Matsunawa H."/>
            <person name="Ichihara T."/>
            <person name="Shiohata N."/>
            <person name="Sano S."/>
            <person name="Moriya S."/>
            <person name="Momiyama H."/>
            <person name="Satoh N."/>
            <person name="Takami S."/>
            <person name="Terashima Y."/>
            <person name="Suzuki O."/>
            <person name="Nakagawa S."/>
            <person name="Senoh A."/>
            <person name="Mizoguchi H."/>
            <person name="Goto Y."/>
            <person name="Shimizu F."/>
            <person name="Wakebe H."/>
            <person name="Hishigaki H."/>
            <person name="Watanabe T."/>
            <person name="Sugiyama A."/>
            <person name="Takemoto M."/>
            <person name="Kawakami B."/>
            <person name="Yamazaki M."/>
            <person name="Watanabe K."/>
            <person name="Kumagai A."/>
            <person name="Itakura S."/>
            <person name="Fukuzumi Y."/>
            <person name="Fujimori Y."/>
            <person name="Komiyama M."/>
            <person name="Tashiro H."/>
            <person name="Tanigami A."/>
            <person name="Fujiwara T."/>
            <person name="Ono T."/>
            <person name="Yamada K."/>
            <person name="Fujii Y."/>
            <person name="Ozaki K."/>
            <person name="Hirao M."/>
            <person name="Ohmori Y."/>
            <person name="Kawabata A."/>
            <person name="Hikiji T."/>
            <person name="Kobatake N."/>
            <person name="Inagaki H."/>
            <person name="Ikema Y."/>
            <person name="Okamoto S."/>
            <person name="Okitani R."/>
            <person name="Kawakami T."/>
            <person name="Noguchi S."/>
            <person name="Itoh T."/>
            <person name="Shigeta K."/>
            <person name="Senba T."/>
            <person name="Matsumura K."/>
            <person name="Nakajima Y."/>
            <person name="Mizuno T."/>
            <person name="Morinaga M."/>
            <person name="Sasaki M."/>
            <person name="Togashi T."/>
            <person name="Oyama M."/>
            <person name="Hata H."/>
            <person name="Watanabe M."/>
            <person name="Komatsu T."/>
            <person name="Mizushima-Sugano J."/>
            <person name="Satoh T."/>
            <person name="Shirai Y."/>
            <person name="Takahashi Y."/>
            <person name="Nakagawa K."/>
            <person name="Okumura K."/>
            <person name="Nagase T."/>
            <person name="Nomura N."/>
            <person name="Kikuchi H."/>
            <person name="Masuho Y."/>
            <person name="Yamashita R."/>
            <person name="Nakai K."/>
            <person name="Yada T."/>
            <person name="Nakamura Y."/>
            <person name="Ohara O."/>
            <person name="Isogai T."/>
            <person name="Sugano S."/>
        </authorList>
    </citation>
    <scope>NUCLEOTIDE SEQUENCE [LARGE SCALE MRNA] (ISOFORM CRK-I)</scope>
</reference>
<reference key="6">
    <citation type="journal article" date="2006" name="Nature">
        <title>DNA sequence of human chromosome 17 and analysis of rearrangement in the human lineage.</title>
        <authorList>
            <person name="Zody M.C."/>
            <person name="Garber M."/>
            <person name="Adams D.J."/>
            <person name="Sharpe T."/>
            <person name="Harrow J."/>
            <person name="Lupski J.R."/>
            <person name="Nicholson C."/>
            <person name="Searle S.M."/>
            <person name="Wilming L."/>
            <person name="Young S.K."/>
            <person name="Abouelleil A."/>
            <person name="Allen N.R."/>
            <person name="Bi W."/>
            <person name="Bloom T."/>
            <person name="Borowsky M.L."/>
            <person name="Bugalter B.E."/>
            <person name="Butler J."/>
            <person name="Chang J.L."/>
            <person name="Chen C.-K."/>
            <person name="Cook A."/>
            <person name="Corum B."/>
            <person name="Cuomo C.A."/>
            <person name="de Jong P.J."/>
            <person name="DeCaprio D."/>
            <person name="Dewar K."/>
            <person name="FitzGerald M."/>
            <person name="Gilbert J."/>
            <person name="Gibson R."/>
            <person name="Gnerre S."/>
            <person name="Goldstein S."/>
            <person name="Grafham D.V."/>
            <person name="Grocock R."/>
            <person name="Hafez N."/>
            <person name="Hagopian D.S."/>
            <person name="Hart E."/>
            <person name="Norman C.H."/>
            <person name="Humphray S."/>
            <person name="Jaffe D.B."/>
            <person name="Jones M."/>
            <person name="Kamal M."/>
            <person name="Khodiyar V.K."/>
            <person name="LaButti K."/>
            <person name="Laird G."/>
            <person name="Lehoczky J."/>
            <person name="Liu X."/>
            <person name="Lokyitsang T."/>
            <person name="Loveland J."/>
            <person name="Lui A."/>
            <person name="Macdonald P."/>
            <person name="Major J.E."/>
            <person name="Matthews L."/>
            <person name="Mauceli E."/>
            <person name="McCarroll S.A."/>
            <person name="Mihalev A.H."/>
            <person name="Mudge J."/>
            <person name="Nguyen C."/>
            <person name="Nicol R."/>
            <person name="O'Leary S.B."/>
            <person name="Osoegawa K."/>
            <person name="Schwartz D.C."/>
            <person name="Shaw-Smith C."/>
            <person name="Stankiewicz P."/>
            <person name="Steward C."/>
            <person name="Swarbreck D."/>
            <person name="Venkataraman V."/>
            <person name="Whittaker C.A."/>
            <person name="Yang X."/>
            <person name="Zimmer A.R."/>
            <person name="Bradley A."/>
            <person name="Hubbard T."/>
            <person name="Birren B.W."/>
            <person name="Rogers J."/>
            <person name="Lander E.S."/>
            <person name="Nusbaum C."/>
        </authorList>
    </citation>
    <scope>NUCLEOTIDE SEQUENCE [LARGE SCALE GENOMIC DNA]</scope>
</reference>
<reference key="7">
    <citation type="submission" date="2005-09" db="EMBL/GenBank/DDBJ databases">
        <authorList>
            <person name="Mural R.J."/>
            <person name="Istrail S."/>
            <person name="Sutton G.G."/>
            <person name="Florea L."/>
            <person name="Halpern A.L."/>
            <person name="Mobarry C.M."/>
            <person name="Lippert R."/>
            <person name="Walenz B."/>
            <person name="Shatkay H."/>
            <person name="Dew I."/>
            <person name="Miller J.R."/>
            <person name="Flanigan M.J."/>
            <person name="Edwards N.J."/>
            <person name="Bolanos R."/>
            <person name="Fasulo D."/>
            <person name="Halldorsson B.V."/>
            <person name="Hannenhalli S."/>
            <person name="Turner R."/>
            <person name="Yooseph S."/>
            <person name="Lu F."/>
            <person name="Nusskern D.R."/>
            <person name="Shue B.C."/>
            <person name="Zheng X.H."/>
            <person name="Zhong F."/>
            <person name="Delcher A.L."/>
            <person name="Huson D.H."/>
            <person name="Kravitz S.A."/>
            <person name="Mouchard L."/>
            <person name="Reinert K."/>
            <person name="Remington K.A."/>
            <person name="Clark A.G."/>
            <person name="Waterman M.S."/>
            <person name="Eichler E.E."/>
            <person name="Adams M.D."/>
            <person name="Hunkapiller M.W."/>
            <person name="Myers E.W."/>
            <person name="Venter J.C."/>
        </authorList>
    </citation>
    <scope>NUCLEOTIDE SEQUENCE [LARGE SCALE GENOMIC DNA]</scope>
</reference>
<reference key="8">
    <citation type="journal article" date="2004" name="Genome Res.">
        <title>The status, quality, and expansion of the NIH full-length cDNA project: the Mammalian Gene Collection (MGC).</title>
        <authorList>
            <consortium name="The MGC Project Team"/>
        </authorList>
    </citation>
    <scope>NUCLEOTIDE SEQUENCE [LARGE SCALE MRNA] (ISOFORMS CRK-I AND CRK-II)</scope>
    <source>
        <tissue>Eye</tissue>
        <tissue>Lung</tissue>
        <tissue>Placenta</tissue>
    </source>
</reference>
<reference key="9">
    <citation type="journal article" date="1996" name="Mol. Cell. Biol.">
        <title>DOCK180, a major CRK-binding protein, alters cell morphology upon translocation to the cell membrane.</title>
        <authorList>
            <person name="Hasegawa H."/>
            <person name="Kiyokawa E."/>
            <person name="Tanaka S."/>
            <person name="Nagashima K."/>
            <person name="Gotoh N."/>
            <person name="Shibuya M."/>
            <person name="Kurata T."/>
            <person name="Matsuda M."/>
        </authorList>
    </citation>
    <scope>INTERACTION WITH DOCK1</scope>
</reference>
<reference key="10">
    <citation type="journal article" date="1996" name="J. Biol. Chem.">
        <title>Interaction between the amino-terminal SH3 domain of CRK and its natural target proteins.</title>
        <authorList>
            <person name="Matsuda M."/>
            <person name="Ota S."/>
            <person name="Tanimura R."/>
            <person name="Nakamura H."/>
            <person name="Matuoka K."/>
            <person name="Takenawa T."/>
            <person name="Nagashima K."/>
            <person name="Kurata T."/>
        </authorList>
    </citation>
    <scope>INTERACTION WITH DOCK1; C3G AND EPS15</scope>
    <scope>MUTAGENESIS OF ASP-150</scope>
</reference>
<reference key="11">
    <citation type="journal article" date="1998" name="J. Biol. Chem.">
        <title>Interplay of the proto-oncogene proteins CrkL and CrkII in insulin-like growth factor-I receptor-mediated signal transduction.</title>
        <authorList>
            <person name="Koval A.P."/>
            <person name="Karas M."/>
            <person name="Zick Y."/>
            <person name="LeRoith D."/>
        </authorList>
    </citation>
    <scope>INTERACTION WITH IRS4</scope>
</reference>
<reference key="12">
    <citation type="journal article" date="1999" name="Oncogene">
        <title>cbl-3: a new mammalian cbl family protein.</title>
        <authorList>
            <person name="Keane M.M."/>
            <person name="Ettenberg S.A."/>
            <person name="Nau M.M."/>
            <person name="Banerjee P."/>
            <person name="Cuello M."/>
            <person name="Penninger J."/>
            <person name="Lipkowitz S."/>
        </authorList>
    </citation>
    <scope>INTERACTION WITH CBLC</scope>
</reference>
<reference key="13">
    <citation type="journal article" date="2000" name="Biochem. Biophys. Res. Commun.">
        <title>Differential interaction of CrkII adaptor protein with platelet-derived growth factor alpha- and beta-receptors is determined by its internal tyrosine phosphorylation.</title>
        <authorList>
            <person name="Matsumoto T."/>
            <person name="Yokote K."/>
            <person name="Take A."/>
            <person name="Takemoto M."/>
            <person name="Asaumi S."/>
            <person name="Hashimoto Y."/>
            <person name="Matsuda M."/>
            <person name="Saito Y."/>
            <person name="Mori S."/>
        </authorList>
    </citation>
    <scope>INTERACTION WITH PDGFRA AND PDGFRB</scope>
</reference>
<reference key="14">
    <citation type="journal article" date="2000" name="Exp. Cell Res.">
        <title>NGF-dependent neurite outgrowth in PC12 cells overexpressing the Src homology 2-domain protein shb requires activation of the Rap1 pathway.</title>
        <authorList>
            <person name="Lu L."/>
            <person name="Anneren C."/>
            <person name="Reedquist K.A."/>
            <person name="Bos J.L."/>
            <person name="Welsh M."/>
        </authorList>
    </citation>
    <scope>INTERACTION WITH SHB</scope>
</reference>
<reference key="15">
    <citation type="journal article" date="2002" name="J. Cell Sci.">
        <title>Ephrin-A5 induces rounding, blebbing and de-adhesion of EphA3-expressing 293T and melanoma cells by CrkII and Rho-mediated signalling.</title>
        <authorList>
            <person name="Lawrenson I.D."/>
            <person name="Wimmer-Kleikamp S.H."/>
            <person name="Lock P."/>
            <person name="Schoenwaelder S.M."/>
            <person name="Down M."/>
            <person name="Boyd A.W."/>
            <person name="Alewood P.F."/>
            <person name="Lackmann M."/>
        </authorList>
    </citation>
    <scope>FUNCTION (ISOFORM CRK-II)</scope>
    <scope>INTERACTION WITH EPHA3</scope>
</reference>
<reference key="16">
    <citation type="journal article" date="2002" name="J. Cell Sci.">
        <title>Novel function of Chat in controlling cell adhesion via Cas-Crk-C3G-pathway-mediated Rap1 activation.</title>
        <authorList>
            <person name="Sakakibara A."/>
            <person name="Ohba Y."/>
            <person name="Kurokawa K."/>
            <person name="Matsuda M."/>
            <person name="Hattori S."/>
        </authorList>
    </citation>
    <scope>FUNCTION</scope>
    <scope>IDENTIFICATION IN A COMPLEX WITH SH2D3C AND BCAR1</scope>
    <scope>MUTAGENESIS OF TRP-169</scope>
</reference>
<reference key="17">
    <citation type="journal article" date="2003" name="Cell">
        <title>DOCK4, a GTPase activator, is disrupted during tumorigenesis.</title>
        <authorList>
            <person name="Yajnik V."/>
            <person name="Paulding C."/>
            <person name="Sordella R."/>
            <person name="McClatchey A.I."/>
            <person name="Saito M."/>
            <person name="Wahrer D.C.R."/>
            <person name="Reynolds P."/>
            <person name="Bell D.W."/>
            <person name="Lake R."/>
            <person name="van den Heuvel S."/>
            <person name="Settleman J."/>
            <person name="Haber D.A."/>
        </authorList>
    </citation>
    <scope>INTERACTION WITH DOCK4</scope>
</reference>
<reference key="18">
    <citation type="journal article" date="2003" name="Exp. Cell Res.">
        <title>Identification of Tyr900 in the kinase domain of c-Kit as a Src-dependent phosphorylation site mediating interaction with c-Crk.</title>
        <authorList>
            <person name="Lennartsson J."/>
            <person name="Wernstedt C."/>
            <person name="Engstrom U."/>
            <person name="Hellman U."/>
            <person name="Ronnstrand L."/>
        </authorList>
    </citation>
    <scope>INTERACTION WITH KIT</scope>
    <scope>IDENTIFICATION BY MASS SPECTROMETRY</scope>
    <scope>PHOSPHORYLATION</scope>
</reference>
<reference key="19">
    <citation type="journal article" date="2005" name="Blood">
        <title>Direct recruitment of CRK and GRB2 to VEGFR-3 induces proliferation, migration, and survival of endothelial cells through the activation of ERK, AKT, and JNK pathways.</title>
        <authorList>
            <person name="Salameh A."/>
            <person name="Galvagni F."/>
            <person name="Bardelli M."/>
            <person name="Bussolino F."/>
            <person name="Oliviero S."/>
        </authorList>
    </citation>
    <scope>INTERACTION WITH FLT4</scope>
</reference>
<reference key="20">
    <citation type="journal article" date="2005" name="Biochem. Biophys. Res. Commun.">
        <title>Signaling by Kit protein-tyrosine kinase--the stem cell factor receptor.</title>
        <authorList>
            <person name="Roskoski R. Jr."/>
        </authorList>
    </citation>
    <scope>REVIEW ON ROLE IN KIT SIGNALING</scope>
</reference>
<reference key="21">
    <citation type="journal article" date="2005" name="Nat. Biotechnol.">
        <title>Immunoaffinity profiling of tyrosine phosphorylation in cancer cells.</title>
        <authorList>
            <person name="Rush J."/>
            <person name="Moritz A."/>
            <person name="Lee K.A."/>
            <person name="Guo A."/>
            <person name="Goss V.L."/>
            <person name="Spek E.J."/>
            <person name="Zhang H."/>
            <person name="Zha X.-M."/>
            <person name="Polakiewicz R.D."/>
            <person name="Comb M.J."/>
        </authorList>
    </citation>
    <scope>PHOSPHORYLATION [LARGE SCALE ANALYSIS] AT TYR-239</scope>
    <scope>IDENTIFICATION BY MASS SPECTROMETRY [LARGE SCALE ANALYSIS]</scope>
</reference>
<reference key="22">
    <citation type="journal article" date="2006" name="J. Biol. Chem.">
        <title>Ack1 mediates Cdc42-dependent cell migration and signaling to p130Cas.</title>
        <authorList>
            <person name="Modzelewska K."/>
            <person name="Newman L.P."/>
            <person name="Desai R."/>
            <person name="Keely P.J."/>
        </authorList>
    </citation>
    <scope>INTERACTION WITH BCAR1; CDC42 AND TNK2</scope>
</reference>
<reference key="23">
    <citation type="journal article" date="2008" name="J. Biol. Chem.">
        <title>Regulation of 3-phosphoinositide-dependent protein kinase-1 (PDK1) by Src involves tyrosine phosphorylation of PDK1 and Src homology 2 domain binding.</title>
        <authorList>
            <person name="Yang K.J."/>
            <person name="Shin S."/>
            <person name="Piao L."/>
            <person name="Shin E."/>
            <person name="Li Y."/>
            <person name="Park K.A."/>
            <person name="Byun H.S."/>
            <person name="Won M."/>
            <person name="Hong J."/>
            <person name="Kweon G.R."/>
            <person name="Hur G.M."/>
            <person name="Seok J.H."/>
            <person name="Chun T."/>
            <person name="Brazil D.P."/>
            <person name="Hemmings B.A."/>
            <person name="Park J."/>
        </authorList>
    </citation>
    <scope>INTERACTION WITH PDPK1</scope>
</reference>
<reference key="24">
    <citation type="journal article" date="2008" name="Proc. Natl. Acad. Sci. U.S.A.">
        <title>A quantitative atlas of mitotic phosphorylation.</title>
        <authorList>
            <person name="Dephoure N."/>
            <person name="Zhou C."/>
            <person name="Villen J."/>
            <person name="Beausoleil S.A."/>
            <person name="Bakalarski C.E."/>
            <person name="Elledge S.J."/>
            <person name="Gygi S.P."/>
        </authorList>
    </citation>
    <scope>PHOSPHORYLATION [LARGE SCALE ANALYSIS] AT SER-74 AND SER-83</scope>
    <scope>IDENTIFICATION BY MASS SPECTROMETRY [LARGE SCALE ANALYSIS]</scope>
    <source>
        <tissue>Cervix carcinoma</tissue>
    </source>
</reference>
<reference key="25">
    <citation type="journal article" date="2009" name="BMC Immunol.">
        <title>Identification of SH3 domain interaction partners of human FasL (CD178) by phage display screening.</title>
        <authorList>
            <person name="Voss M."/>
            <person name="Lettau M."/>
            <person name="Janssen O."/>
        </authorList>
    </citation>
    <scope>INTERACTION WITH FASLG</scope>
</reference>
<reference key="26">
    <citation type="journal article" date="2009" name="J. Biol. Chem.">
        <title>DOCK5 and DOCK1 regulate Caco-2 intestinal epithelial cell spreading and migration on collagen IV.</title>
        <authorList>
            <person name="Sanders M.A."/>
            <person name="Ampasala D."/>
            <person name="Basson M.D."/>
        </authorList>
    </citation>
    <scope>FUNCTION (ISOFORM CRK-II)</scope>
    <scope>INTERACTION WITH DOCK5</scope>
    <scope>MUTAGENESIS OF TRP-169</scope>
</reference>
<reference key="27">
    <citation type="journal article" date="2009" name="PLoS ONE">
        <title>Unc119 protects from Shigella infection by inhibiting the Abl family kinases.</title>
        <authorList>
            <person name="Vepachedu R."/>
            <person name="Karim Z."/>
            <person name="Patel O."/>
            <person name="Goplen N."/>
            <person name="Alam R."/>
        </authorList>
    </citation>
    <scope>IDENTIFICATION IN A COMPLEX WITH ABL1; ABL2 AND UNC119</scope>
</reference>
<reference key="28">
    <citation type="journal article" date="2010" name="Proc. Natl. Acad. Sci. U.S.A.">
        <title>Pseudopodium-enriched atypical kinase 1 regulates the cytoskeleton and cancer progression.</title>
        <authorList>
            <person name="Wang Y."/>
            <person name="Kelber J.A."/>
            <person name="Tran Cao H.S."/>
            <person name="Cantin G.T."/>
            <person name="Lin R."/>
            <person name="Wang W."/>
            <person name="Kaushal S."/>
            <person name="Bristow J.M."/>
            <person name="Edgington T.S."/>
            <person name="Hoffman R.M."/>
            <person name="Bouvet M."/>
            <person name="Yates J.R. III"/>
            <person name="Klemke R.L."/>
        </authorList>
    </citation>
    <scope>INTERACTION WITH PEAK1</scope>
</reference>
<reference key="29">
    <citation type="journal article" date="2010" name="Proc. Natl. Acad. Sci. U.S.A.">
        <authorList>
            <person name="Wang Y."/>
            <person name="Kelber J.A."/>
            <person name="Tran Cao H.S."/>
            <person name="Cantin G.T."/>
            <person name="Lin R."/>
            <person name="Wang W."/>
            <person name="Kaushal S."/>
            <person name="Bristow J.M."/>
            <person name="Edgington T.S."/>
            <person name="Hoffman R.M."/>
            <person name="Bouvet M."/>
            <person name="Yates J.R. III"/>
            <person name="Klemke R.L."/>
        </authorList>
    </citation>
    <scope>ERRATUM OF PUBMED:20534451</scope>
</reference>
<reference key="30">
    <citation type="journal article" date="2010" name="Sci. Signal.">
        <title>Quantitative phosphoproteomics reveals widespread full phosphorylation site occupancy during mitosis.</title>
        <authorList>
            <person name="Olsen J.V."/>
            <person name="Vermeulen M."/>
            <person name="Santamaria A."/>
            <person name="Kumar C."/>
            <person name="Miller M.L."/>
            <person name="Jensen L.J."/>
            <person name="Gnad F."/>
            <person name="Cox J."/>
            <person name="Jensen T.S."/>
            <person name="Nigg E.A."/>
            <person name="Brunak S."/>
            <person name="Mann M."/>
        </authorList>
    </citation>
    <scope>PHOSPHORYLATION [LARGE SCALE ANALYSIS] AT SER-41 AND SER-74</scope>
    <scope>PHOSPHORYLATION [LARGE SCALE ANALYSIS] AT SER-194 (ISOFORM CRK-I)</scope>
    <scope>IDENTIFICATION BY MASS SPECTROMETRY [LARGE SCALE ANALYSIS]</scope>
    <source>
        <tissue>Cervix carcinoma</tissue>
    </source>
</reference>
<reference key="31">
    <citation type="journal article" date="2011" name="BMC Syst. Biol.">
        <title>Initial characterization of the human central proteome.</title>
        <authorList>
            <person name="Burkard T.R."/>
            <person name="Planyavsky M."/>
            <person name="Kaupe I."/>
            <person name="Breitwieser F.P."/>
            <person name="Buerckstuemmer T."/>
            <person name="Bennett K.L."/>
            <person name="Superti-Furga G."/>
            <person name="Colinge J."/>
        </authorList>
    </citation>
    <scope>IDENTIFICATION BY MASS SPECTROMETRY [LARGE SCALE ANALYSIS]</scope>
</reference>
<reference key="32">
    <citation type="journal article" date="2011" name="Sci. Signal.">
        <title>System-wide temporal characterization of the proteome and phosphoproteome of human embryonic stem cell differentiation.</title>
        <authorList>
            <person name="Rigbolt K.T."/>
            <person name="Prokhorova T.A."/>
            <person name="Akimov V."/>
            <person name="Henningsen J."/>
            <person name="Johansen P.T."/>
            <person name="Kratchmarova I."/>
            <person name="Kassem M."/>
            <person name="Mann M."/>
            <person name="Olsen J.V."/>
            <person name="Blagoev B."/>
        </authorList>
    </citation>
    <scope>IDENTIFICATION BY MASS SPECTROMETRY [LARGE SCALE ANALYSIS]</scope>
</reference>
<reference key="33">
    <citation type="journal article" date="2012" name="Mol. Cell. Proteomics">
        <title>Comparative large-scale characterisation of plant vs. mammal proteins reveals similar and idiosyncratic N-alpha acetylation features.</title>
        <authorList>
            <person name="Bienvenut W.V."/>
            <person name="Sumpton D."/>
            <person name="Martinez A."/>
            <person name="Lilla S."/>
            <person name="Espagne C."/>
            <person name="Meinnel T."/>
            <person name="Giglione C."/>
        </authorList>
    </citation>
    <scope>ACETYLATION [LARGE SCALE ANALYSIS] AT ALA-2</scope>
    <scope>CLEAVAGE OF INITIATOR METHIONINE [LARGE SCALE ANALYSIS]</scope>
    <scope>IDENTIFICATION BY MASS SPECTROMETRY [LARGE SCALE ANALYSIS]</scope>
</reference>
<reference key="34">
    <citation type="journal article" date="2012" name="Proc. Natl. Acad. Sci. U.S.A.">
        <title>N-terminal acetylome analyses and functional insights of the N-terminal acetyltransferase NatB.</title>
        <authorList>
            <person name="Van Damme P."/>
            <person name="Lasa M."/>
            <person name="Polevoda B."/>
            <person name="Gazquez C."/>
            <person name="Elosegui-Artola A."/>
            <person name="Kim D.S."/>
            <person name="De Juan-Pardo E."/>
            <person name="Demeyer K."/>
            <person name="Hole K."/>
            <person name="Larrea E."/>
            <person name="Timmerman E."/>
            <person name="Prieto J."/>
            <person name="Arnesen T."/>
            <person name="Sherman F."/>
            <person name="Gevaert K."/>
            <person name="Aldabe R."/>
        </authorList>
    </citation>
    <scope>ACETYLATION [LARGE SCALE ANALYSIS] AT ALA-2</scope>
    <scope>CLEAVAGE OF INITIATOR METHIONINE [LARGE SCALE ANALYSIS]</scope>
    <scope>IDENTIFICATION BY MASS SPECTROMETRY [LARGE SCALE ANALYSIS]</scope>
</reference>
<reference key="35">
    <citation type="journal article" date="2013" name="J. Proteome Res.">
        <title>Toward a comprehensive characterization of a human cancer cell phosphoproteome.</title>
        <authorList>
            <person name="Zhou H."/>
            <person name="Di Palma S."/>
            <person name="Preisinger C."/>
            <person name="Peng M."/>
            <person name="Polat A.N."/>
            <person name="Heck A.J."/>
            <person name="Mohammed S."/>
        </authorList>
    </citation>
    <scope>PHOSPHORYLATION [LARGE SCALE ANALYSIS] AT SER-40; SER-41; TYR-108 AND SER-125</scope>
    <scope>IDENTIFICATION BY MASS SPECTROMETRY [LARGE SCALE ANALYSIS]</scope>
    <source>
        <tissue>Cervix carcinoma</tissue>
        <tissue>Erythroleukemia</tissue>
    </source>
</reference>
<reference key="36">
    <citation type="journal article" date="2014" name="J. Proteomics">
        <title>An enzyme assisted RP-RPLC approach for in-depth analysis of human liver phosphoproteome.</title>
        <authorList>
            <person name="Bian Y."/>
            <person name="Song C."/>
            <person name="Cheng K."/>
            <person name="Dong M."/>
            <person name="Wang F."/>
            <person name="Huang J."/>
            <person name="Sun D."/>
            <person name="Wang L."/>
            <person name="Ye M."/>
            <person name="Zou H."/>
        </authorList>
    </citation>
    <scope>PHOSPHORYLATION [LARGE SCALE ANALYSIS] AT SER-125</scope>
    <scope>IDENTIFICATION BY MASS SPECTROMETRY [LARGE SCALE ANALYSIS]</scope>
    <source>
        <tissue>Liver</tissue>
    </source>
</reference>
<reference key="37">
    <citation type="journal article" date="2019" name="Proc. Natl. Acad. Sci. U.S.A.">
        <title>PEAK3/C19orf35 pseudokinase, a new NFK3 kinase family member, inhibits CrkII through dimerization.</title>
        <authorList>
            <person name="Lopez M.L."/>
            <person name="Lo M."/>
            <person name="Kung J.E."/>
            <person name="Dudkiewicz M."/>
            <person name="Jang G.M."/>
            <person name="Von Dollen J."/>
            <person name="Johnson J.R."/>
            <person name="Krogan N.J."/>
            <person name="Pawlowski K."/>
            <person name="Jura N."/>
        </authorList>
    </citation>
    <scope>FUNCTION (ISOFORM CRK-II)</scope>
    <scope>INTERACTION WITH PEAK3 (ISOFORM CRK-II)</scope>
    <scope>MUTAGENESIS OF TRP-169 AND TRP-275</scope>
</reference>
<reference key="38">
    <citation type="journal article" date="2002" name="Proc. Natl. Acad. Sci. U.S.A.">
        <title>Structure of a regulatory complex involving the Abl SH3 domain, the Crk SH2 domain, and a Crk-derived phosphopeptide.</title>
        <authorList>
            <person name="Donaldson L.W."/>
            <person name="Gish G."/>
            <person name="Pawson T."/>
            <person name="Kay L.E."/>
            <person name="Forman-Kay J.D."/>
        </authorList>
    </citation>
    <scope>STRUCTURE BY NMR OF 12-120 IN COMPLEX WITH ABL1</scope>
    <scope>INTERACTION OF THE CRK SH2 DOMAIN WITH PHOSPHORYLATED TYR-221</scope>
</reference>
<reference key="39">
    <citation type="journal article" date="2007" name="Nat. Struct. Mol. Biol.">
        <title>Structural basis for the transforming activity of human cancer-related signaling adaptor protein CRK.</title>
        <authorList>
            <person name="Kobashigawa Y."/>
            <person name="Sakai M."/>
            <person name="Naito M."/>
            <person name="Yokochi M."/>
            <person name="Kumeta H."/>
            <person name="Makino Y."/>
            <person name="Ogura K."/>
            <person name="Tanaka S."/>
            <person name="Inagaki F."/>
        </authorList>
    </citation>
    <scope>STRUCTURE BY NMR (ISOFORMS CRK-I AND CRK-II)</scope>
    <scope>FUNCTION (ISOFORM CRK-II)</scope>
    <scope>PHOSPHORYLATION AT TYR-221</scope>
</reference>
<feature type="initiator methionine" description="Removed" evidence="33 34">
    <location>
        <position position="1"/>
    </location>
</feature>
<feature type="chain" id="PRO_0000079351" description="Adapter molecule crk">
    <location>
        <begin position="2"/>
        <end position="304"/>
    </location>
</feature>
<feature type="domain" description="SH2" evidence="3">
    <location>
        <begin position="13"/>
        <end position="118"/>
    </location>
</feature>
<feature type="domain" description="SH3 1" evidence="4">
    <location>
        <begin position="132"/>
        <end position="192"/>
    </location>
</feature>
<feature type="domain" description="SH3 2" evidence="4">
    <location>
        <begin position="235"/>
        <end position="296"/>
    </location>
</feature>
<feature type="region of interest" description="Disordered" evidence="5">
    <location>
        <begin position="61"/>
        <end position="85"/>
    </location>
</feature>
<feature type="region of interest" description="Disordered" evidence="5">
    <location>
        <begin position="201"/>
        <end position="229"/>
    </location>
</feature>
<feature type="compositionally biased region" description="Pro residues" evidence="5">
    <location>
        <begin position="67"/>
        <end position="82"/>
    </location>
</feature>
<feature type="site" description="Proline switch" evidence="1">
    <location>
        <position position="237"/>
    </location>
</feature>
<feature type="modified residue" description="N-acetylalanine" evidence="33 34">
    <location>
        <position position="2"/>
    </location>
</feature>
<feature type="modified residue" description="Phosphoserine" evidence="35">
    <location>
        <position position="40"/>
    </location>
</feature>
<feature type="modified residue" description="Phosphoserine" evidence="32 35">
    <location>
        <position position="41"/>
    </location>
</feature>
<feature type="modified residue" description="Phosphoserine" evidence="31 32">
    <location>
        <position position="74"/>
    </location>
</feature>
<feature type="modified residue" description="Phosphoserine" evidence="31">
    <location>
        <position position="83"/>
    </location>
</feature>
<feature type="modified residue" description="Phosphotyrosine" evidence="35">
    <location>
        <position position="108"/>
    </location>
</feature>
<feature type="modified residue" description="Phosphoserine" evidence="35 36">
    <location>
        <position position="125"/>
    </location>
</feature>
<feature type="modified residue" description="Phosphotyrosine; by ABL1" evidence="17">
    <location>
        <position position="221"/>
    </location>
</feature>
<feature type="modified residue" description="Phosphotyrosine" evidence="30">
    <location>
        <position position="239"/>
    </location>
</feature>
<feature type="splice variant" id="VSP_041153" description="In isoform Crk-I." evidence="27 28">
    <original>N</original>
    <variation>R</variation>
    <location>
        <position position="204"/>
    </location>
</feature>
<feature type="splice variant" id="VSP_041154" description="In isoform Crk-I." evidence="27 28">
    <location>
        <begin position="205"/>
        <end position="304"/>
    </location>
</feature>
<feature type="mutagenesis site" description="Abolishes interaction with DOCK1." evidence="25">
    <original>D</original>
    <variation>K</variation>
    <location>
        <position position="150"/>
    </location>
</feature>
<feature type="mutagenesis site" description="Abolishes interaction with PEAK3." evidence="23">
    <original>W</original>
    <variation>K</variation>
    <location>
        <position position="169"/>
    </location>
</feature>
<feature type="mutagenesis site" description="Abolishes interaction with DOCK5. Abolishes RAP1 activation." evidence="11 19">
    <original>W</original>
    <variation>L</variation>
    <location>
        <position position="169"/>
    </location>
</feature>
<feature type="mutagenesis site" description="No effect on interaction with PEAK3." evidence="23">
    <original>W</original>
    <variation>K</variation>
    <location>
        <position position="275"/>
    </location>
</feature>
<feature type="sequence conflict" description="In Ref. 1; BAA01505 and 2; AAB28213." evidence="29" ref="1 2">
    <original>L</original>
    <variation>W</variation>
    <location>
        <position position="109"/>
    </location>
</feature>
<feature type="sequence conflict" description="In Ref. 1; BAA01505 and 2; AAB28213." evidence="29" ref="1 2">
    <original>G</original>
    <variation>P</variation>
    <location>
        <position position="215"/>
    </location>
</feature>
<feature type="sequence conflict" description="In Ref. 1; BAA01505 and 2; AAB28213." evidence="29" ref="1 2">
    <original>E</original>
    <variation>G</variation>
    <location>
        <position position="278"/>
    </location>
</feature>
<feature type="strand" evidence="38">
    <location>
        <begin position="7"/>
        <end position="13"/>
    </location>
</feature>
<feature type="strand" evidence="41">
    <location>
        <begin position="14"/>
        <end position="16"/>
    </location>
</feature>
<feature type="helix" evidence="37">
    <location>
        <begin position="20"/>
        <end position="27"/>
    </location>
</feature>
<feature type="strand" evidence="38">
    <location>
        <begin position="30"/>
        <end position="33"/>
    </location>
</feature>
<feature type="strand" evidence="37">
    <location>
        <begin position="34"/>
        <end position="39"/>
    </location>
</feature>
<feature type="strand" evidence="37">
    <location>
        <begin position="41"/>
        <end position="43"/>
    </location>
</feature>
<feature type="strand" evidence="37">
    <location>
        <begin position="46"/>
        <end position="52"/>
    </location>
</feature>
<feature type="strand" evidence="38">
    <location>
        <begin position="54"/>
        <end position="56"/>
    </location>
</feature>
<feature type="strand" evidence="37">
    <location>
        <begin position="57"/>
        <end position="63"/>
    </location>
</feature>
<feature type="strand" evidence="37">
    <location>
        <begin position="66"/>
        <end position="69"/>
    </location>
</feature>
<feature type="strand" evidence="38">
    <location>
        <begin position="70"/>
        <end position="77"/>
    </location>
</feature>
<feature type="turn" evidence="38">
    <location>
        <begin position="78"/>
        <end position="80"/>
    </location>
</feature>
<feature type="strand" evidence="37">
    <location>
        <begin position="87"/>
        <end position="89"/>
    </location>
</feature>
<feature type="strand" evidence="37">
    <location>
        <begin position="92"/>
        <end position="96"/>
    </location>
</feature>
<feature type="helix" evidence="37">
    <location>
        <begin position="97"/>
        <end position="106"/>
    </location>
</feature>
<feature type="strand" evidence="37">
    <location>
        <begin position="109"/>
        <end position="112"/>
    </location>
</feature>
<feature type="strand" evidence="37">
    <location>
        <begin position="116"/>
        <end position="118"/>
    </location>
</feature>
<feature type="strand" evidence="39">
    <location>
        <begin position="120"/>
        <end position="123"/>
    </location>
</feature>
<feature type="helix" evidence="41">
    <location>
        <begin position="126"/>
        <end position="128"/>
    </location>
</feature>
<feature type="strand" evidence="43">
    <location>
        <begin position="135"/>
        <end position="141"/>
    </location>
</feature>
<feature type="strand" evidence="38">
    <location>
        <begin position="146"/>
        <end position="150"/>
    </location>
</feature>
<feature type="strand" evidence="43">
    <location>
        <begin position="158"/>
        <end position="163"/>
    </location>
</feature>
<feature type="strand" evidence="43">
    <location>
        <begin position="165"/>
        <end position="173"/>
    </location>
</feature>
<feature type="strand" evidence="43">
    <location>
        <begin position="179"/>
        <end position="183"/>
    </location>
</feature>
<feature type="helix" evidence="43">
    <location>
        <begin position="184"/>
        <end position="186"/>
    </location>
</feature>
<feature type="strand" evidence="43">
    <location>
        <begin position="187"/>
        <end position="190"/>
    </location>
</feature>
<feature type="strand" evidence="38">
    <location>
        <begin position="208"/>
        <end position="210"/>
    </location>
</feature>
<feature type="strand" evidence="42">
    <location>
        <begin position="224"/>
        <end position="227"/>
    </location>
</feature>
<feature type="strand" evidence="42">
    <location>
        <begin position="229"/>
        <end position="231"/>
    </location>
</feature>
<feature type="strand" evidence="40">
    <location>
        <begin position="239"/>
        <end position="242"/>
    </location>
</feature>
<feature type="strand" evidence="40">
    <location>
        <begin position="253"/>
        <end position="255"/>
    </location>
</feature>
<feature type="strand" evidence="40">
    <location>
        <begin position="260"/>
        <end position="269"/>
    </location>
</feature>
<feature type="strand" evidence="40">
    <location>
        <begin position="273"/>
        <end position="279"/>
    </location>
</feature>
<feature type="strand" evidence="40">
    <location>
        <begin position="282"/>
        <end position="287"/>
    </location>
</feature>
<feature type="helix" evidence="40">
    <location>
        <begin position="288"/>
        <end position="290"/>
    </location>
</feature>
<feature type="modified residue" description="Phosphoserine" evidence="32">
    <location sequence="P46108-2">
        <position position="194"/>
    </location>
</feature>
<keyword id="KW-0002">3D-structure</keyword>
<keyword id="KW-0007">Acetylation</keyword>
<keyword id="KW-0025">Alternative splicing</keyword>
<keyword id="KW-1003">Cell membrane</keyword>
<keyword id="KW-0963">Cytoplasm</keyword>
<keyword id="KW-0472">Membrane</keyword>
<keyword id="KW-0597">Phosphoprotein</keyword>
<keyword id="KW-1267">Proteomics identification</keyword>
<keyword id="KW-0656">Proto-oncogene</keyword>
<keyword id="KW-1185">Reference proteome</keyword>
<keyword id="KW-0677">Repeat</keyword>
<keyword id="KW-0727">SH2 domain</keyword>
<keyword id="KW-0728">SH3 domain</keyword>
<proteinExistence type="evidence at protein level"/>
<name>CRK_HUMAN</name>
<organism>
    <name type="scientific">Homo sapiens</name>
    <name type="common">Human</name>
    <dbReference type="NCBI Taxonomy" id="9606"/>
    <lineage>
        <taxon>Eukaryota</taxon>
        <taxon>Metazoa</taxon>
        <taxon>Chordata</taxon>
        <taxon>Craniata</taxon>
        <taxon>Vertebrata</taxon>
        <taxon>Euteleostomi</taxon>
        <taxon>Mammalia</taxon>
        <taxon>Eutheria</taxon>
        <taxon>Euarchontoglires</taxon>
        <taxon>Primates</taxon>
        <taxon>Haplorrhini</taxon>
        <taxon>Catarrhini</taxon>
        <taxon>Hominidae</taxon>
        <taxon>Homo</taxon>
    </lineage>
</organism>
<protein>
    <recommendedName>
        <fullName>Adapter molecule crk</fullName>
    </recommendedName>
    <alternativeName>
        <fullName>Proto-oncogene c-Crk</fullName>
    </alternativeName>
    <alternativeName>
        <fullName>p38</fullName>
    </alternativeName>
</protein>
<comment type="function">
    <text evidence="11">Involved in cell branching and adhesion mediated by BCAR1-CRK-RAPGEF1 signaling and activation of RAP1.</text>
</comment>
<comment type="function">
    <molecule>Isoform Crk-II</molecule>
    <text evidence="2 9 15 17 19 23">Regulates cell adhesion, spreading and migration (PubMed:31311869). Mediates attachment-induced MAPK8 activation, membrane ruffling and cell motility in a Rac-dependent manner. Involved in phagocytosis of apoptotic cells and cell motility via its interaction with DOCK1 and DOCK4 (PubMed:19004829). May regulate the EFNA5-EPHA3 signaling (By similarity).</text>
</comment>
<comment type="subunit">
    <text evidence="6 8 10 11 12 13 14 16 18 20 21 22 24 25 26">Component of a complex comprised of SH2D3C, BCAR1/CAS, and CRK (PubMed:12432078). Within the complex, interacts with SH2D3C (via C-terminus), and BCAR1/CAS (PubMed:12432078). Found in a complex with ABL1, ABL2, CRK and UNC119; leading to the inhibition of CRK phosphorylation by ABL kinases (PubMed:19381274). Interacts with ABL1, C3G, DOCK3, DOCK5, MAP4K1, MAPK8 and SOS via its first SH3 domain. Interacts (via SH2 domain) with BCAR1, CBL, CBLB, PXN, IRS4 and GAB1 upon stimulus-induced tyrosine phosphorylation. Interacts (via SH2 domain) with several tyrosine-phosphorylated growth factor receptors such as EGFR and INSR. Interacts with FLT1 (tyrosine-phosphorylated). Interacts with DOCK1 and DOCK4. Interacts with SHB. Interacts with PEAK1. Interacts with FASLG. Part of a collagen stimulated complex involved in cell migration composed of CDC42, CRK, TNK2 and p130cas/BCAR1. Interacts (via SH2 domain) with the 'Tyr-9' phosphorylated form of PDPK1. Interacts with CBLC.</text>
</comment>
<comment type="subunit">
    <molecule>Isoform Crk-II</molecule>
    <text evidence="7 9 13 23">Interacts (via SH2 domain) with PDGFRA (tyrosine phosphorylated) and PDGFRB (tyrosine phosphorylated) (PubMed:10733900). Interacts with EPHA3 (phosphorylated); upon activation of EPHA3 by the ligand EFNA5 and EPHA3 tyrosine kinase activity-dependent and mediates EFNA5-EPHA3 signaling through RHOA GTPase activation (PubMed:11870224). Interacts with KIT (PubMed:12878163). Interacts with PEAK3; the interaction requires PEAK3 homodimerization (PubMed:31311869).</text>
</comment>
<comment type="interaction">
    <interactant intactId="EBI-886">
        <id>P46108</id>
    </interactant>
    <interactant intactId="EBI-375543">
        <id>P00519</id>
        <label>ABL1</label>
    </interactant>
    <organismsDiffer>false</organismsDiffer>
    <experiments>5</experiments>
</comment>
<comment type="interaction">
    <interactant intactId="EBI-886">
        <id>P46108</id>
    </interactant>
    <interactant intactId="EBI-1102694">
        <id>P42684</id>
        <label>ABL2</label>
    </interactant>
    <organismsDiffer>false</organismsDiffer>
    <experiments>6</experiments>
</comment>
<comment type="interaction">
    <interactant intactId="EBI-886">
        <id>P46108</id>
    </interactant>
    <interactant intactId="EBI-308663">
        <id>A7KAX9</id>
        <label>ARHGAP32</label>
    </interactant>
    <organismsDiffer>false</organismsDiffer>
    <experiments>3</experiments>
</comment>
<comment type="interaction">
    <interactant intactId="EBI-886">
        <id>P46108</id>
    </interactant>
    <interactant intactId="EBI-311099">
        <id>O15085</id>
        <label>ARHGEF11</label>
    </interactant>
    <organismsDiffer>false</organismsDiffer>
    <experiments>2</experiments>
</comment>
<comment type="interaction">
    <interactant intactId="EBI-886">
        <id>P46108</id>
    </interactant>
    <interactant intactId="EBI-346622">
        <id>Q9ULH1</id>
        <label>ASAP1</label>
    </interactant>
    <organismsDiffer>false</organismsDiffer>
    <experiments>5</experiments>
</comment>
<comment type="interaction">
    <interactant intactId="EBI-886">
        <id>P46108</id>
    </interactant>
    <interactant intactId="EBI-2609717">
        <id>Q8TDY4</id>
        <label>ASAP3</label>
    </interactant>
    <organismsDiffer>false</organismsDiffer>
    <experiments>6</experiments>
</comment>
<comment type="interaction">
    <interactant intactId="EBI-886">
        <id>P46108</id>
    </interactant>
    <interactant intactId="EBI-745641">
        <id>Q96DX5</id>
        <label>ASB9</label>
    </interactant>
    <organismsDiffer>false</organismsDiffer>
    <experiments>2</experiments>
</comment>
<comment type="interaction">
    <interactant intactId="EBI-886">
        <id>P46108</id>
    </interactant>
    <interactant intactId="EBI-930964">
        <id>P54253</id>
        <label>ATXN1</label>
    </interactant>
    <organismsDiffer>false</organismsDiffer>
    <experiments>9</experiments>
</comment>
<comment type="interaction">
    <interactant intactId="EBI-886">
        <id>P46108</id>
    </interactant>
    <interactant intactId="EBI-702093">
        <id>P56945</id>
        <label>BCAR1</label>
    </interactant>
    <organismsDiffer>false</organismsDiffer>
    <experiments>7</experiments>
</comment>
<comment type="interaction">
    <interactant intactId="EBI-886">
        <id>P46108</id>
    </interactant>
    <interactant intactId="EBI-1754943">
        <id>Q9NZM4</id>
        <label>BICRA</label>
    </interactant>
    <organismsDiffer>false</organismsDiffer>
    <experiments>2</experiments>
</comment>
<comment type="interaction">
    <interactant intactId="EBI-886">
        <id>P46108</id>
    </interactant>
    <interactant intactId="EBI-748936">
        <id>O43683</id>
        <label>BUB1</label>
    </interactant>
    <organismsDiffer>false</organismsDiffer>
    <experiments>2</experiments>
</comment>
<comment type="interaction">
    <interactant intactId="EBI-886">
        <id>P46108</id>
    </interactant>
    <interactant intactId="EBI-946029">
        <id>Q6P1W5</id>
        <label>C1orf94</label>
    </interactant>
    <organismsDiffer>false</organismsDiffer>
    <experiments>3</experiments>
</comment>
<comment type="interaction">
    <interactant intactId="EBI-886">
        <id>P46108</id>
    </interactant>
    <interactant intactId="EBI-518228">
        <id>P22681</id>
        <label>CBL</label>
    </interactant>
    <organismsDiffer>false</organismsDiffer>
    <experiments>11</experiments>
</comment>
<comment type="interaction">
    <interactant intactId="EBI-886">
        <id>P46108</id>
    </interactant>
    <interactant intactId="EBI-744027">
        <id>Q13191</id>
        <label>CBLB</label>
    </interactant>
    <organismsDiffer>false</organismsDiffer>
    <experiments>5</experiments>
</comment>
<comment type="interaction">
    <interactant intactId="EBI-886">
        <id>P46108</id>
    </interactant>
    <interactant intactId="EBI-446740">
        <id>Q14185</id>
        <label>DOCK1</label>
    </interactant>
    <organismsDiffer>false</organismsDiffer>
    <experiments>5</experiments>
</comment>
<comment type="interaction">
    <interactant intactId="EBI-886">
        <id>P46108</id>
    </interactant>
    <interactant intactId="EBI-1773858">
        <id>Q9H7D0</id>
        <label>DOCK5</label>
    </interactant>
    <organismsDiffer>false</organismsDiffer>
    <experiments>4</experiments>
</comment>
<comment type="interaction">
    <interactant intactId="EBI-886">
        <id>P46108</id>
    </interactant>
    <interactant intactId="EBI-710457">
        <id>Q7L190</id>
        <label>DPPA4</label>
    </interactant>
    <organismsDiffer>false</organismsDiffer>
    <experiments>4</experiments>
</comment>
<comment type="interaction">
    <interactant intactId="EBI-886">
        <id>P46108</id>
    </interactant>
    <interactant intactId="EBI-297353">
        <id>P00533</id>
        <label>EGFR</label>
    </interactant>
    <organismsDiffer>false</organismsDiffer>
    <experiments>4</experiments>
</comment>
<comment type="interaction">
    <interactant intactId="EBI-886">
        <id>P46108</id>
    </interactant>
    <interactant intactId="EBI-1758534">
        <id>P41970</id>
        <label>ELK3</label>
    </interactant>
    <organismsDiffer>false</organismsDiffer>
    <experiments>4</experiments>
</comment>
<comment type="interaction">
    <interactant intactId="EBI-886">
        <id>P46108</id>
    </interactant>
    <interactant intactId="EBI-720706">
        <id>P21860</id>
        <label>ERBB3</label>
    </interactant>
    <organismsDiffer>false</organismsDiffer>
    <experiments>2</experiments>
</comment>
<comment type="interaction">
    <interactant intactId="EBI-886">
        <id>P46108</id>
    </interactant>
    <interactant intactId="EBI-11533409">
        <id>Q96Q35-2</id>
        <label>FLACC1</label>
    </interactant>
    <organismsDiffer>false</organismsDiffer>
    <experiments>3</experiments>
</comment>
<comment type="interaction">
    <interactant intactId="EBI-886">
        <id>P46108</id>
    </interactant>
    <interactant intactId="EBI-350432">
        <id>P21333</id>
        <label>FLNA</label>
    </interactant>
    <organismsDiffer>false</organismsDiffer>
    <experiments>3</experiments>
</comment>
<comment type="interaction">
    <interactant intactId="EBI-886">
        <id>P46108</id>
    </interactant>
    <interactant intactId="EBI-489954">
        <id>Q14315</id>
        <label>FLNC</label>
    </interactant>
    <organismsDiffer>false</organismsDiffer>
    <experiments>2</experiments>
</comment>
<comment type="interaction">
    <interactant intactId="EBI-886">
        <id>P46108</id>
    </interactant>
    <interactant intactId="EBI-3946257">
        <id>P36888</id>
        <label>FLT3</label>
    </interactant>
    <organismsDiffer>false</organismsDiffer>
    <experiments>2</experiments>
</comment>
<comment type="interaction">
    <interactant intactId="EBI-886">
        <id>P46108</id>
    </interactant>
    <interactant intactId="EBI-517684">
        <id>Q13480</id>
        <label>GAB1</label>
    </interactant>
    <organismsDiffer>false</organismsDiffer>
    <experiments>2</experiments>
</comment>
<comment type="interaction">
    <interactant intactId="EBI-886">
        <id>P46108</id>
    </interactant>
    <interactant intactId="EBI-3440103">
        <id>Q9H706</id>
        <label>GAREM1</label>
    </interactant>
    <organismsDiffer>false</organismsDiffer>
    <experiments>3</experiments>
</comment>
<comment type="interaction">
    <interactant intactId="EBI-886">
        <id>P46108</id>
    </interactant>
    <interactant intactId="EBI-466029">
        <id>P42858</id>
        <label>HTT</label>
    </interactant>
    <organismsDiffer>false</organismsDiffer>
    <experiments>3</experiments>
</comment>
<comment type="interaction">
    <interactant intactId="EBI-886">
        <id>P46108</id>
    </interactant>
    <interactant intactId="EBI-356594">
        <id>O14654</id>
        <label>IRS4</label>
    </interactant>
    <organismsDiffer>false</organismsDiffer>
    <experiments>8</experiments>
</comment>
<comment type="interaction">
    <interactant intactId="EBI-886">
        <id>P46108</id>
    </interactant>
    <interactant intactId="EBI-1379503">
        <id>P10721</id>
        <label>KIT</label>
    </interactant>
    <organismsDiffer>false</organismsDiffer>
    <experiments>4</experiments>
</comment>
<comment type="interaction">
    <interactant intactId="EBI-886">
        <id>P46108</id>
    </interactant>
    <interactant intactId="EBI-881">
        <id>Q92918</id>
        <label>MAP4K1</label>
    </interactant>
    <organismsDiffer>false</organismsDiffer>
    <experiments>3</experiments>
</comment>
<comment type="interaction">
    <interactant intactId="EBI-886">
        <id>P46108</id>
    </interactant>
    <interactant intactId="EBI-1279">
        <id>Q9Y4K4</id>
        <label>MAP4K5</label>
    </interactant>
    <organismsDiffer>false</organismsDiffer>
    <experiments>5</experiments>
</comment>
<comment type="interaction">
    <interactant intactId="EBI-886">
        <id>P46108</id>
    </interactant>
    <interactant intactId="EBI-1753690">
        <id>P20774</id>
        <label>OGN</label>
    </interactant>
    <organismsDiffer>false</organismsDiffer>
    <experiments>2</experiments>
</comment>
<comment type="interaction">
    <interactant intactId="EBI-886">
        <id>P46108</id>
    </interactant>
    <interactant intactId="EBI-2861522">
        <id>P16234</id>
        <label>PDGFRA</label>
    </interactant>
    <organismsDiffer>false</organismsDiffer>
    <experiments>4</experiments>
</comment>
<comment type="interaction">
    <interactant intactId="EBI-886">
        <id>P46108</id>
    </interactant>
    <interactant intactId="EBI-79893">
        <id>Q92569</id>
        <label>PIK3R3</label>
    </interactant>
    <organismsDiffer>false</organismsDiffer>
    <experiments>3</experiments>
</comment>
<comment type="interaction">
    <interactant intactId="EBI-886">
        <id>P46108</id>
    </interactant>
    <interactant intactId="EBI-744056">
        <id>Q8ND30</id>
        <label>PPFIBP2</label>
    </interactant>
    <organismsDiffer>false</organismsDiffer>
    <experiments>5</experiments>
</comment>
<comment type="interaction">
    <interactant intactId="EBI-886">
        <id>P46108</id>
    </interactant>
    <interactant intactId="EBI-357669">
        <id>P62333</id>
        <label>PSMC6</label>
    </interactant>
    <organismsDiffer>false</organismsDiffer>
    <experiments>10</experiments>
</comment>
<comment type="interaction">
    <interactant intactId="EBI-886">
        <id>P46108</id>
    </interactant>
    <interactant intactId="EBI-702142">
        <id>Q05397</id>
        <label>PTK2</label>
    </interactant>
    <organismsDiffer>false</organismsDiffer>
    <experiments>3</experiments>
</comment>
<comment type="interaction">
    <interactant intactId="EBI-886">
        <id>P46108</id>
    </interactant>
    <interactant intactId="EBI-710431">
        <id>P29074</id>
        <label>PTPN4</label>
    </interactant>
    <organismsDiffer>false</organismsDiffer>
    <experiments>3</experiments>
</comment>
<comment type="interaction">
    <interactant intactId="EBI-886">
        <id>P46108</id>
    </interactant>
    <interactant intactId="EBI-976876">
        <id>Q13905</id>
        <label>RAPGEF1</label>
    </interactant>
    <organismsDiffer>false</organismsDiffer>
    <experiments>6</experiments>
</comment>
<comment type="interaction">
    <interactant intactId="EBI-886">
        <id>P46108</id>
    </interactant>
    <interactant intactId="EBI-1570523">
        <id>Q8TB24</id>
        <label>RIN3</label>
    </interactant>
    <organismsDiffer>false</organismsDiffer>
    <experiments>2</experiments>
</comment>
<comment type="interaction">
    <interactant intactId="EBI-886">
        <id>P46108</id>
    </interactant>
    <interactant intactId="EBI-3957636">
        <id>Q8IYX7</id>
        <label>SAXO1</label>
    </interactant>
    <organismsDiffer>false</organismsDiffer>
    <experiments>3</experiments>
</comment>
<comment type="interaction">
    <interactant intactId="EBI-886">
        <id>P46108</id>
    </interactant>
    <interactant intactId="EBI-1570571">
        <id>Q9UPX8</id>
        <label>SHANK2</label>
    </interactant>
    <organismsDiffer>false</organismsDiffer>
    <experiments>2</experiments>
</comment>
<comment type="interaction">
    <interactant intactId="EBI-886">
        <id>P46108</id>
    </interactant>
    <interactant intactId="EBI-727209">
        <id>O60493</id>
        <label>SNX3</label>
    </interactant>
    <organismsDiffer>false</organismsDiffer>
    <experiments>2</experiments>
</comment>
<comment type="interaction">
    <interactant intactId="EBI-886">
        <id>P46108</id>
    </interactant>
    <interactant intactId="EBI-297487">
        <id>Q07889</id>
        <label>SOS1</label>
    </interactant>
    <organismsDiffer>false</organismsDiffer>
    <experiments>6</experiments>
</comment>
<comment type="interaction">
    <interactant intactId="EBI-886">
        <id>P46108</id>
    </interactant>
    <interactant intactId="EBI-298181">
        <id>Q07890</id>
        <label>SOS2</label>
    </interactant>
    <organismsDiffer>false</organismsDiffer>
    <experiments>3</experiments>
</comment>
<comment type="interaction">
    <interactant intactId="EBI-886">
        <id>P46108</id>
    </interactant>
    <interactant intactId="EBI-765739">
        <id>Q96T58</id>
        <label>SPEN</label>
    </interactant>
    <organismsDiffer>false</organismsDiffer>
    <experiments>2</experiments>
</comment>
<comment type="interaction">
    <interactant intactId="EBI-886">
        <id>P46108</id>
    </interactant>
    <interactant intactId="EBI-750109">
        <id>Q9NYB0</id>
        <label>TERF2IP</label>
    </interactant>
    <organismsDiffer>false</organismsDiffer>
    <experiments>2</experiments>
</comment>
<comment type="interaction">
    <interactant intactId="EBI-886">
        <id>P46108</id>
    </interactant>
    <interactant intactId="EBI-11952721">
        <id>Q05BL1</id>
        <label>TP53BP2</label>
    </interactant>
    <organismsDiffer>false</organismsDiffer>
    <experiments>3</experiments>
</comment>
<comment type="interaction">
    <interactant intactId="EBI-886">
        <id>P46108</id>
    </interactant>
    <interactant intactId="EBI-7877438">
        <id>P42681</id>
        <label>TXK</label>
    </interactant>
    <organismsDiffer>false</organismsDiffer>
    <experiments>3</experiments>
</comment>
<comment type="interaction">
    <interactant intactId="EBI-886">
        <id>P46108</id>
    </interactant>
    <interactant intactId="EBI-742050">
        <id>Q70EK8</id>
        <label>USP53</label>
    </interactant>
    <organismsDiffer>false</organismsDiffer>
    <experiments>11</experiments>
</comment>
<comment type="interaction">
    <interactant intactId="EBI-886">
        <id>P46108</id>
    </interactant>
    <interactant intactId="EBI-7705033">
        <id>Q9BRX9</id>
        <label>WDR83</label>
    </interactant>
    <organismsDiffer>false</organismsDiffer>
    <experiments>2</experiments>
</comment>
<comment type="interaction">
    <interactant intactId="EBI-886">
        <id>P46108</id>
    </interactant>
    <interactant intactId="EBI-2608673">
        <id>O40931</id>
        <label>ORF39</label>
    </interactant>
    <organismsDiffer>true</organismsDiffer>
    <experiments>2</experiments>
</comment>
<comment type="interaction">
    <interactant intactId="EBI-287556">
        <id>P46108-1</id>
    </interactant>
    <interactant intactId="EBI-297353">
        <id>P00533</id>
        <label>EGFR</label>
    </interactant>
    <organismsDiffer>false</organismsDiffer>
    <experiments>3</experiments>
</comment>
<comment type="interaction">
    <interactant intactId="EBI-287556">
        <id>P46108-1</id>
    </interactant>
    <interactant intactId="EBI-437708">
        <id>P62937</id>
        <label>PPIA</label>
    </interactant>
    <organismsDiffer>false</organismsDiffer>
    <experiments>4</experiments>
</comment>
<comment type="interaction">
    <interactant intactId="EBI-287556">
        <id>P46108-1</id>
    </interactant>
    <interactant intactId="EBI-976876">
        <id>Q13905</id>
        <label>RAPGEF1</label>
    </interactant>
    <organismsDiffer>false</organismsDiffer>
    <experiments>3</experiments>
</comment>
<comment type="interaction">
    <interactant intactId="EBI-287559">
        <id>P46108-2</id>
    </interactant>
    <interactant intactId="EBI-930964">
        <id>P54253</id>
        <label>ATXN1</label>
    </interactant>
    <organismsDiffer>false</organismsDiffer>
    <experiments>6</experiments>
</comment>
<comment type="subcellular location">
    <subcellularLocation>
        <location evidence="1">Cytoplasm</location>
    </subcellularLocation>
    <subcellularLocation>
        <location evidence="1">Cell membrane</location>
    </subcellularLocation>
    <text evidence="1">Translocated to the plasma membrane upon cell adhesion.</text>
</comment>
<comment type="alternative products">
    <event type="alternative splicing"/>
    <isoform>
        <id>P46108-1</id>
        <name>Crk-II</name>
        <sequence type="displayed"/>
    </isoform>
    <isoform>
        <id>P46108-2</id>
        <name>Crk-I</name>
        <sequence type="described" ref="VSP_041153 VSP_041154"/>
    </isoform>
</comment>
<comment type="domain">
    <text evidence="1">The C-terminal SH3 domain function as a negative modulator for transformation and the N-terminal SH3 domain appears to function as a positive regulator for transformation.</text>
</comment>
<comment type="domain">
    <text>The SH2 domain mediates interaction with tyrosine phosphorylated proteins. Mediates interaction with SHB.</text>
</comment>
<comment type="PTM">
    <text evidence="2 17">Phosphorylated on Tyr-221 upon cell adhesion. Results in the negative regulation of the association with SH2- and SH3-binding partners, possibly by the formation of an intramolecular interaction of phosphorylated Tyr-221 with the SH2 domain. This leads finally to the down-regulation of the Crk signaling pathway (PubMed:17515907). Isoform Crk-II: Phosphorylated by KIT (By similarity).</text>
</comment>
<comment type="PTM">
    <text evidence="1">Proline isomerization at Pro-237 by PPIA acts as a switch between two conformations: an autoinhibitory conformation in the cis form, where the tandem SH3 domains interact intramolecularly, and an activated conformation in the trans form.</text>
</comment>
<comment type="similarity">
    <text evidence="29">Belongs to the CRK family.</text>
</comment>
<comment type="online information" name="Atlas of Genetics and Cytogenetics in Oncology and Haematology">
    <link uri="https://atlasgeneticsoncology.org/gene/40149/CRK"/>
</comment>
<evidence type="ECO:0000250" key="1"/>
<evidence type="ECO:0000250" key="2">
    <source>
        <dbReference type="UniProtKB" id="Q64010"/>
    </source>
</evidence>
<evidence type="ECO:0000255" key="3">
    <source>
        <dbReference type="PROSITE-ProRule" id="PRU00191"/>
    </source>
</evidence>
<evidence type="ECO:0000255" key="4">
    <source>
        <dbReference type="PROSITE-ProRule" id="PRU00192"/>
    </source>
</evidence>
<evidence type="ECO:0000256" key="5">
    <source>
        <dbReference type="SAM" id="MobiDB-lite"/>
    </source>
</evidence>
<evidence type="ECO:0000269" key="6">
    <source>
    </source>
</evidence>
<evidence type="ECO:0000269" key="7">
    <source>
    </source>
</evidence>
<evidence type="ECO:0000269" key="8">
    <source>
    </source>
</evidence>
<evidence type="ECO:0000269" key="9">
    <source>
    </source>
</evidence>
<evidence type="ECO:0000269" key="10">
    <source>
    </source>
</evidence>
<evidence type="ECO:0000269" key="11">
    <source>
    </source>
</evidence>
<evidence type="ECO:0000269" key="12">
    <source>
    </source>
</evidence>
<evidence type="ECO:0000269" key="13">
    <source>
    </source>
</evidence>
<evidence type="ECO:0000269" key="14">
    <source>
    </source>
</evidence>
<evidence type="ECO:0000269" key="15">
    <source>
    </source>
</evidence>
<evidence type="ECO:0000269" key="16">
    <source>
    </source>
</evidence>
<evidence type="ECO:0000269" key="17">
    <source>
    </source>
</evidence>
<evidence type="ECO:0000269" key="18">
    <source>
    </source>
</evidence>
<evidence type="ECO:0000269" key="19">
    <source>
    </source>
</evidence>
<evidence type="ECO:0000269" key="20">
    <source>
    </source>
</evidence>
<evidence type="ECO:0000269" key="21">
    <source>
    </source>
</evidence>
<evidence type="ECO:0000269" key="22">
    <source>
    </source>
</evidence>
<evidence type="ECO:0000269" key="23">
    <source>
    </source>
</evidence>
<evidence type="ECO:0000269" key="24">
    <source>
    </source>
</evidence>
<evidence type="ECO:0000269" key="25">
    <source>
    </source>
</evidence>
<evidence type="ECO:0000269" key="26">
    <source>
    </source>
</evidence>
<evidence type="ECO:0000303" key="27">
    <source>
    </source>
</evidence>
<evidence type="ECO:0000303" key="28">
    <source>
    </source>
</evidence>
<evidence type="ECO:0000305" key="29"/>
<evidence type="ECO:0007744" key="30">
    <source>
    </source>
</evidence>
<evidence type="ECO:0007744" key="31">
    <source>
    </source>
</evidence>
<evidence type="ECO:0007744" key="32">
    <source>
    </source>
</evidence>
<evidence type="ECO:0007744" key="33">
    <source>
    </source>
</evidence>
<evidence type="ECO:0007744" key="34">
    <source>
    </source>
</evidence>
<evidence type="ECO:0007744" key="35">
    <source>
    </source>
</evidence>
<evidence type="ECO:0007744" key="36">
    <source>
    </source>
</evidence>
<evidence type="ECO:0007829" key="37">
    <source>
        <dbReference type="PDB" id="1JU5"/>
    </source>
</evidence>
<evidence type="ECO:0007829" key="38">
    <source>
        <dbReference type="PDB" id="2DVJ"/>
    </source>
</evidence>
<evidence type="ECO:0007829" key="39">
    <source>
        <dbReference type="PDB" id="2EYV"/>
    </source>
</evidence>
<evidence type="ECO:0007829" key="40">
    <source>
        <dbReference type="PDB" id="2EYX"/>
    </source>
</evidence>
<evidence type="ECO:0007829" key="41">
    <source>
        <dbReference type="PDB" id="2EYY"/>
    </source>
</evidence>
<evidence type="ECO:0007829" key="42">
    <source>
        <dbReference type="PDB" id="2EYZ"/>
    </source>
</evidence>
<evidence type="ECO:0007829" key="43">
    <source>
        <dbReference type="PDB" id="5UL6"/>
    </source>
</evidence>
<dbReference type="EMBL" id="D10656">
    <property type="protein sequence ID" value="BAA01505.1"/>
    <property type="molecule type" value="mRNA"/>
</dbReference>
<dbReference type="EMBL" id="S65701">
    <property type="protein sequence ID" value="AAB28213.1"/>
    <property type="molecule type" value="Genomic_DNA"/>
</dbReference>
<dbReference type="EMBL" id="BT007277">
    <property type="protein sequence ID" value="AAP35941.1"/>
    <property type="molecule type" value="mRNA"/>
</dbReference>
<dbReference type="EMBL" id="EU332838">
    <property type="protein sequence ID" value="ABY87527.1"/>
    <property type="molecule type" value="Genomic_DNA"/>
</dbReference>
<dbReference type="EMBL" id="AK291060">
    <property type="protein sequence ID" value="BAF83749.1"/>
    <property type="molecule type" value="mRNA"/>
</dbReference>
<dbReference type="EMBL" id="AC032044">
    <property type="status" value="NOT_ANNOTATED_CDS"/>
    <property type="molecule type" value="Genomic_DNA"/>
</dbReference>
<dbReference type="EMBL" id="AC100748">
    <property type="status" value="NOT_ANNOTATED_CDS"/>
    <property type="molecule type" value="Genomic_DNA"/>
</dbReference>
<dbReference type="EMBL" id="CH471108">
    <property type="protein sequence ID" value="EAW90621.1"/>
    <property type="molecule type" value="Genomic_DNA"/>
</dbReference>
<dbReference type="EMBL" id="CH471108">
    <property type="protein sequence ID" value="EAW90624.1"/>
    <property type="molecule type" value="Genomic_DNA"/>
</dbReference>
<dbReference type="EMBL" id="CH471108">
    <property type="protein sequence ID" value="EAW90625.1"/>
    <property type="molecule type" value="Genomic_DNA"/>
</dbReference>
<dbReference type="EMBL" id="BC001718">
    <property type="protein sequence ID" value="AAH01718.1"/>
    <property type="molecule type" value="mRNA"/>
</dbReference>
<dbReference type="EMBL" id="BC008506">
    <property type="protein sequence ID" value="AAH08506.1"/>
    <property type="molecule type" value="mRNA"/>
</dbReference>
<dbReference type="EMBL" id="BC009837">
    <property type="protein sequence ID" value="AAH09837.1"/>
    <property type="molecule type" value="mRNA"/>
</dbReference>
<dbReference type="CCDS" id="CCDS11002.1">
    <molecule id="P46108-1"/>
</dbReference>
<dbReference type="CCDS" id="CCDS45561.1">
    <molecule id="P46108-2"/>
</dbReference>
<dbReference type="PIR" id="A45022">
    <property type="entry name" value="A45022"/>
</dbReference>
<dbReference type="RefSeq" id="NP_005197.3">
    <molecule id="P46108-2"/>
    <property type="nucleotide sequence ID" value="NM_005206.4"/>
</dbReference>
<dbReference type="RefSeq" id="NP_058431.2">
    <molecule id="P46108-1"/>
    <property type="nucleotide sequence ID" value="NM_016823.3"/>
</dbReference>
<dbReference type="PDB" id="1JU5">
    <property type="method" value="NMR"/>
    <property type="chains" value="A=12-120"/>
</dbReference>
<dbReference type="PDB" id="2DVJ">
    <property type="method" value="NMR"/>
    <property type="chains" value="A=1-228"/>
</dbReference>
<dbReference type="PDB" id="2EYV">
    <property type="method" value="NMR"/>
    <property type="chains" value="A=6-124"/>
</dbReference>
<dbReference type="PDB" id="2EYW">
    <property type="method" value="NMR"/>
    <property type="chains" value="A=125-198"/>
</dbReference>
<dbReference type="PDB" id="2EYX">
    <property type="method" value="NMR"/>
    <property type="chains" value="A=232-298"/>
</dbReference>
<dbReference type="PDB" id="2EYY">
    <property type="method" value="NMR"/>
    <property type="chains" value="A=1-204"/>
</dbReference>
<dbReference type="PDB" id="2EYZ">
    <property type="method" value="NMR"/>
    <property type="chains" value="A=1-304"/>
</dbReference>
<dbReference type="PDB" id="2MS4">
    <property type="method" value="NMR"/>
    <property type="chains" value="B=216-224"/>
</dbReference>
<dbReference type="PDB" id="5UL6">
    <property type="method" value="X-ray"/>
    <property type="resolution" value="1.45 A"/>
    <property type="chains" value="A=134-191"/>
</dbReference>
<dbReference type="PDB" id="6ATV">
    <property type="method" value="X-ray"/>
    <property type="resolution" value="1.75 A"/>
    <property type="chains" value="A=134-191"/>
</dbReference>
<dbReference type="PDBsum" id="1JU5"/>
<dbReference type="PDBsum" id="2DVJ"/>
<dbReference type="PDBsum" id="2EYV"/>
<dbReference type="PDBsum" id="2EYW"/>
<dbReference type="PDBsum" id="2EYX"/>
<dbReference type="PDBsum" id="2EYY"/>
<dbReference type="PDBsum" id="2EYZ"/>
<dbReference type="PDBsum" id="2MS4"/>
<dbReference type="PDBsum" id="5UL6"/>
<dbReference type="PDBsum" id="6ATV"/>
<dbReference type="BMRB" id="P46108"/>
<dbReference type="SMR" id="P46108"/>
<dbReference type="BioGRID" id="107788">
    <property type="interactions" value="362"/>
</dbReference>
<dbReference type="CORUM" id="P46108"/>
<dbReference type="DIP" id="DIP-199N"/>
<dbReference type="FunCoup" id="P46108">
    <property type="interactions" value="3489"/>
</dbReference>
<dbReference type="IntAct" id="P46108">
    <property type="interactions" value="358"/>
</dbReference>
<dbReference type="MINT" id="P46108"/>
<dbReference type="STRING" id="9606.ENSP00000300574"/>
<dbReference type="ChEMBL" id="CHEMBL5005"/>
<dbReference type="MoonDB" id="P46108">
    <property type="type" value="Predicted"/>
</dbReference>
<dbReference type="GlyGen" id="P46108">
    <property type="glycosylation" value="2 sites, 1 N-linked glycan (1 site), 1 O-linked glycan (1 site)"/>
</dbReference>
<dbReference type="iPTMnet" id="P46108"/>
<dbReference type="MetOSite" id="P46108"/>
<dbReference type="PhosphoSitePlus" id="P46108"/>
<dbReference type="BioMuta" id="CRK"/>
<dbReference type="DMDM" id="158939322"/>
<dbReference type="REPRODUCTION-2DPAGE" id="IPI00399054"/>
<dbReference type="jPOST" id="P46108"/>
<dbReference type="MassIVE" id="P46108"/>
<dbReference type="PaxDb" id="9606-ENSP00000300574"/>
<dbReference type="PeptideAtlas" id="P46108"/>
<dbReference type="ProteomicsDB" id="55732">
    <molecule id="P46108-1"/>
</dbReference>
<dbReference type="ProteomicsDB" id="55733">
    <molecule id="P46108-2"/>
</dbReference>
<dbReference type="Pumba" id="P46108"/>
<dbReference type="TopDownProteomics" id="P46108-1">
    <molecule id="P46108-1"/>
</dbReference>
<dbReference type="TopDownProteomics" id="P46108-2">
    <molecule id="P46108-2"/>
</dbReference>
<dbReference type="ABCD" id="P46108">
    <property type="antibodies" value="2 sequenced antibodies"/>
</dbReference>
<dbReference type="Antibodypedia" id="4185">
    <property type="antibodies" value="620 antibodies from 38 providers"/>
</dbReference>
<dbReference type="DNASU" id="1398"/>
<dbReference type="Ensembl" id="ENST00000300574.3">
    <molecule id="P46108-1"/>
    <property type="protein sequence ID" value="ENSP00000300574.2"/>
    <property type="gene ID" value="ENSG00000167193.8"/>
</dbReference>
<dbReference type="Ensembl" id="ENST00000398970.5">
    <molecule id="P46108-2"/>
    <property type="protein sequence ID" value="ENSP00000381942.5"/>
    <property type="gene ID" value="ENSG00000167193.8"/>
</dbReference>
<dbReference type="GeneID" id="1398"/>
<dbReference type="KEGG" id="hsa:1398"/>
<dbReference type="MANE-Select" id="ENST00000300574.3">
    <property type="protein sequence ID" value="ENSP00000300574.2"/>
    <property type="RefSeq nucleotide sequence ID" value="NM_016823.4"/>
    <property type="RefSeq protein sequence ID" value="NP_058431.2"/>
</dbReference>
<dbReference type="UCSC" id="uc002fsl.4">
    <molecule id="P46108-1"/>
    <property type="organism name" value="human"/>
</dbReference>
<dbReference type="AGR" id="HGNC:2362"/>
<dbReference type="CTD" id="1398"/>
<dbReference type="DisGeNET" id="1398"/>
<dbReference type="GeneCards" id="CRK"/>
<dbReference type="HGNC" id="HGNC:2362">
    <property type="gene designation" value="CRK"/>
</dbReference>
<dbReference type="HPA" id="ENSG00000167193">
    <property type="expression patterns" value="Low tissue specificity"/>
</dbReference>
<dbReference type="MIM" id="164762">
    <property type="type" value="gene"/>
</dbReference>
<dbReference type="neXtProt" id="NX_P46108"/>
<dbReference type="OpenTargets" id="ENSG00000167193"/>
<dbReference type="PharmGKB" id="PA26880"/>
<dbReference type="VEuPathDB" id="HostDB:ENSG00000167193"/>
<dbReference type="eggNOG" id="KOG4792">
    <property type="taxonomic scope" value="Eukaryota"/>
</dbReference>
<dbReference type="GeneTree" id="ENSGT00820000127055"/>
<dbReference type="HOGENOM" id="CLU_060542_1_0_1"/>
<dbReference type="InParanoid" id="P46108"/>
<dbReference type="OMA" id="SMTRQEA"/>
<dbReference type="OrthoDB" id="9204160at2759"/>
<dbReference type="PAN-GO" id="P46108">
    <property type="GO annotations" value="4 GO annotations based on evolutionary models"/>
</dbReference>
<dbReference type="PhylomeDB" id="P46108"/>
<dbReference type="TreeFam" id="TF321436"/>
<dbReference type="PathwayCommons" id="P46108"/>
<dbReference type="Reactome" id="R-HSA-170984">
    <property type="pathway name" value="ARMS-mediated activation"/>
</dbReference>
<dbReference type="Reactome" id="R-HSA-186763">
    <property type="pathway name" value="Downstream signal transduction"/>
</dbReference>
<dbReference type="Reactome" id="R-HSA-2029482">
    <property type="pathway name" value="Regulation of actin dynamics for phagocytic cup formation"/>
</dbReference>
<dbReference type="Reactome" id="R-HSA-372708">
    <property type="pathway name" value="p130Cas linkage to MAPK signaling for integrins"/>
</dbReference>
<dbReference type="Reactome" id="R-HSA-4420097">
    <property type="pathway name" value="VEGFA-VEGFR2 Pathway"/>
</dbReference>
<dbReference type="Reactome" id="R-HSA-8849471">
    <property type="pathway name" value="PTK6 Regulates RHO GTPases, RAS GTPase and MAP kinases"/>
</dbReference>
<dbReference type="Reactome" id="R-HSA-8875555">
    <property type="pathway name" value="MET activates RAP1 and RAC1"/>
</dbReference>
<dbReference type="Reactome" id="R-HSA-8875656">
    <property type="pathway name" value="MET receptor recycling"/>
</dbReference>
<dbReference type="Reactome" id="R-HSA-912631">
    <property type="pathway name" value="Regulation of signaling by CBL"/>
</dbReference>
<dbReference type="Reactome" id="R-HSA-9664422">
    <property type="pathway name" value="FCGR3A-mediated phagocytosis"/>
</dbReference>
<dbReference type="SignaLink" id="P46108"/>
<dbReference type="SIGNOR" id="P46108"/>
<dbReference type="BioGRID-ORCS" id="1398">
    <property type="hits" value="64 hits in 1162 CRISPR screens"/>
</dbReference>
<dbReference type="ChiTaRS" id="CRK">
    <property type="organism name" value="human"/>
</dbReference>
<dbReference type="EvolutionaryTrace" id="P46108"/>
<dbReference type="GeneWiki" id="CRK_(gene)"/>
<dbReference type="GenomeRNAi" id="1398"/>
<dbReference type="Pharos" id="P46108">
    <property type="development level" value="Tchem"/>
</dbReference>
<dbReference type="PRO" id="PR:P46108"/>
<dbReference type="Proteomes" id="UP000005640">
    <property type="component" value="Chromosome 17"/>
</dbReference>
<dbReference type="RNAct" id="P46108">
    <property type="molecule type" value="protein"/>
</dbReference>
<dbReference type="Bgee" id="ENSG00000167193">
    <property type="expression patterns" value="Expressed in secondary oocyte and 219 other cell types or tissues"/>
</dbReference>
<dbReference type="ExpressionAtlas" id="P46108">
    <property type="expression patterns" value="baseline and differential"/>
</dbReference>
<dbReference type="GO" id="GO:0015629">
    <property type="term" value="C:actin cytoskeleton"/>
    <property type="evidence" value="ECO:0007669"/>
    <property type="project" value="Ensembl"/>
</dbReference>
<dbReference type="GO" id="GO:0005737">
    <property type="term" value="C:cytoplasm"/>
    <property type="evidence" value="ECO:0000318"/>
    <property type="project" value="GO_Central"/>
</dbReference>
<dbReference type="GO" id="GO:0005829">
    <property type="term" value="C:cytosol"/>
    <property type="evidence" value="ECO:0000304"/>
    <property type="project" value="Reactome"/>
</dbReference>
<dbReference type="GO" id="GO:0070062">
    <property type="term" value="C:extracellular exosome"/>
    <property type="evidence" value="ECO:0007005"/>
    <property type="project" value="UniProtKB"/>
</dbReference>
<dbReference type="GO" id="GO:0016020">
    <property type="term" value="C:membrane"/>
    <property type="evidence" value="ECO:0000250"/>
    <property type="project" value="UniProtKB"/>
</dbReference>
<dbReference type="GO" id="GO:0031594">
    <property type="term" value="C:neuromuscular junction"/>
    <property type="evidence" value="ECO:0007669"/>
    <property type="project" value="Ensembl"/>
</dbReference>
<dbReference type="GO" id="GO:0005634">
    <property type="term" value="C:nucleus"/>
    <property type="evidence" value="ECO:0000304"/>
    <property type="project" value="ProtInc"/>
</dbReference>
<dbReference type="GO" id="GO:0005886">
    <property type="term" value="C:plasma membrane"/>
    <property type="evidence" value="ECO:0007669"/>
    <property type="project" value="UniProtKB-SubCell"/>
</dbReference>
<dbReference type="GO" id="GO:0032991">
    <property type="term" value="C:protein-containing complex"/>
    <property type="evidence" value="ECO:0000353"/>
    <property type="project" value="CAFA"/>
</dbReference>
<dbReference type="GO" id="GO:0008092">
    <property type="term" value="F:cytoskeletal protein binding"/>
    <property type="evidence" value="ECO:0007669"/>
    <property type="project" value="Ensembl"/>
</dbReference>
<dbReference type="GO" id="GO:0046875">
    <property type="term" value="F:ephrin receptor binding"/>
    <property type="evidence" value="ECO:0000353"/>
    <property type="project" value="UniProtKB"/>
</dbReference>
<dbReference type="GO" id="GO:0005159">
    <property type="term" value="F:insulin-like growth factor receptor binding"/>
    <property type="evidence" value="ECO:0007669"/>
    <property type="project" value="Ensembl"/>
</dbReference>
<dbReference type="GO" id="GO:0019900">
    <property type="term" value="F:kinase binding"/>
    <property type="evidence" value="ECO:0000353"/>
    <property type="project" value="UniProtKB"/>
</dbReference>
<dbReference type="GO" id="GO:0001784">
    <property type="term" value="F:phosphotyrosine residue binding"/>
    <property type="evidence" value="ECO:0000353"/>
    <property type="project" value="CAFA"/>
</dbReference>
<dbReference type="GO" id="GO:0045309">
    <property type="term" value="F:protein phosphorylated amino acid binding"/>
    <property type="evidence" value="ECO:0000314"/>
    <property type="project" value="CAFA"/>
</dbReference>
<dbReference type="GO" id="GO:1990782">
    <property type="term" value="F:protein tyrosine kinase binding"/>
    <property type="evidence" value="ECO:0000353"/>
    <property type="project" value="CAFA"/>
</dbReference>
<dbReference type="GO" id="GO:0030971">
    <property type="term" value="F:receptor tyrosine kinase binding"/>
    <property type="evidence" value="ECO:0000318"/>
    <property type="project" value="GO_Central"/>
</dbReference>
<dbReference type="GO" id="GO:0097110">
    <property type="term" value="F:scaffold protein binding"/>
    <property type="evidence" value="ECO:0007669"/>
    <property type="project" value="Ensembl"/>
</dbReference>
<dbReference type="GO" id="GO:0042169">
    <property type="term" value="F:SH2 domain binding"/>
    <property type="evidence" value="ECO:0000353"/>
    <property type="project" value="UniProtKB"/>
</dbReference>
<dbReference type="GO" id="GO:0017124">
    <property type="term" value="F:SH3 domain binding"/>
    <property type="evidence" value="ECO:0000353"/>
    <property type="project" value="CAFA"/>
</dbReference>
<dbReference type="GO" id="GO:0035591">
    <property type="term" value="F:signaling adaptor activity"/>
    <property type="evidence" value="ECO:0000314"/>
    <property type="project" value="CAFA"/>
</dbReference>
<dbReference type="GO" id="GO:0030159">
    <property type="term" value="F:signaling receptor complex adaptor activity"/>
    <property type="evidence" value="ECO:0007669"/>
    <property type="project" value="Ensembl"/>
</dbReference>
<dbReference type="GO" id="GO:0031625">
    <property type="term" value="F:ubiquitin protein ligase binding"/>
    <property type="evidence" value="ECO:0007669"/>
    <property type="project" value="Ensembl"/>
</dbReference>
<dbReference type="GO" id="GO:0030036">
    <property type="term" value="P:actin cytoskeleton organization"/>
    <property type="evidence" value="ECO:0000315"/>
    <property type="project" value="UniProtKB"/>
</dbReference>
<dbReference type="GO" id="GO:0060326">
    <property type="term" value="P:cell chemotaxis"/>
    <property type="evidence" value="ECO:0007669"/>
    <property type="project" value="Ensembl"/>
</dbReference>
<dbReference type="GO" id="GO:0016477">
    <property type="term" value="P:cell migration"/>
    <property type="evidence" value="ECO:0000318"/>
    <property type="project" value="GO_Central"/>
</dbReference>
<dbReference type="GO" id="GO:0008283">
    <property type="term" value="P:cell population proliferation"/>
    <property type="evidence" value="ECO:0007669"/>
    <property type="project" value="Ensembl"/>
</dbReference>
<dbReference type="GO" id="GO:1990859">
    <property type="term" value="P:cellular response to endothelin"/>
    <property type="evidence" value="ECO:0007669"/>
    <property type="project" value="Ensembl"/>
</dbReference>
<dbReference type="GO" id="GO:1990314">
    <property type="term" value="P:cellular response to insulin-like growth factor stimulus"/>
    <property type="evidence" value="ECO:0007669"/>
    <property type="project" value="Ensembl"/>
</dbReference>
<dbReference type="GO" id="GO:1990090">
    <property type="term" value="P:cellular response to nerve growth factor stimulus"/>
    <property type="evidence" value="ECO:0007669"/>
    <property type="project" value="Ensembl"/>
</dbReference>
<dbReference type="GO" id="GO:0071732">
    <property type="term" value="P:cellular response to nitric oxide"/>
    <property type="evidence" value="ECO:0007669"/>
    <property type="project" value="Ensembl"/>
</dbReference>
<dbReference type="GO" id="GO:0071560">
    <property type="term" value="P:cellular response to transforming growth factor beta stimulus"/>
    <property type="evidence" value="ECO:0007669"/>
    <property type="project" value="Ensembl"/>
</dbReference>
<dbReference type="GO" id="GO:0098749">
    <property type="term" value="P:cerebellar neuron development"/>
    <property type="evidence" value="ECO:0007669"/>
    <property type="project" value="Ensembl"/>
</dbReference>
<dbReference type="GO" id="GO:0021987">
    <property type="term" value="P:cerebral cortex development"/>
    <property type="evidence" value="ECO:0007669"/>
    <property type="project" value="Ensembl"/>
</dbReference>
<dbReference type="GO" id="GO:0016358">
    <property type="term" value="P:dendrite development"/>
    <property type="evidence" value="ECO:0007669"/>
    <property type="project" value="Ensembl"/>
</dbReference>
<dbReference type="GO" id="GO:0007167">
    <property type="term" value="P:enzyme-linked receptor protein signaling pathway"/>
    <property type="evidence" value="ECO:0000318"/>
    <property type="project" value="GO_Central"/>
</dbReference>
<dbReference type="GO" id="GO:0048013">
    <property type="term" value="P:ephrin receptor signaling pathway"/>
    <property type="evidence" value="ECO:0000314"/>
    <property type="project" value="UniProtKB"/>
</dbReference>
<dbReference type="GO" id="GO:0030010">
    <property type="term" value="P:establishment of cell polarity"/>
    <property type="evidence" value="ECO:0007669"/>
    <property type="project" value="Ensembl"/>
</dbReference>
<dbReference type="GO" id="GO:0035685">
    <property type="term" value="P:helper T cell diapedesis"/>
    <property type="evidence" value="ECO:0007669"/>
    <property type="project" value="Ensembl"/>
</dbReference>
<dbReference type="GO" id="GO:0021766">
    <property type="term" value="P:hippocampus development"/>
    <property type="evidence" value="ECO:0007669"/>
    <property type="project" value="Ensembl"/>
</dbReference>
<dbReference type="GO" id="GO:0006629">
    <property type="term" value="P:lipid metabolic process"/>
    <property type="evidence" value="ECO:0007669"/>
    <property type="project" value="Ensembl"/>
</dbReference>
<dbReference type="GO" id="GO:2000146">
    <property type="term" value="P:negative regulation of cell motility"/>
    <property type="evidence" value="ECO:0000314"/>
    <property type="project" value="CAFA"/>
</dbReference>
<dbReference type="GO" id="GO:0045953">
    <property type="term" value="P:negative regulation of natural killer cell mediated cytotoxicity"/>
    <property type="evidence" value="ECO:0007669"/>
    <property type="project" value="Ensembl"/>
</dbReference>
<dbReference type="GO" id="GO:0061045">
    <property type="term" value="P:negative regulation of wound healing"/>
    <property type="evidence" value="ECO:0000314"/>
    <property type="project" value="CAFA"/>
</dbReference>
<dbReference type="GO" id="GO:0001764">
    <property type="term" value="P:neuron migration"/>
    <property type="evidence" value="ECO:0007669"/>
    <property type="project" value="Ensembl"/>
</dbReference>
<dbReference type="GO" id="GO:0030307">
    <property type="term" value="P:positive regulation of cell growth"/>
    <property type="evidence" value="ECO:0000314"/>
    <property type="project" value="CAFA"/>
</dbReference>
<dbReference type="GO" id="GO:0046330">
    <property type="term" value="P:positive regulation of JNK cascade"/>
    <property type="evidence" value="ECO:0007669"/>
    <property type="project" value="Ensembl"/>
</dbReference>
<dbReference type="GO" id="GO:0035022">
    <property type="term" value="P:positive regulation of Rac protein signal transduction"/>
    <property type="evidence" value="ECO:0007669"/>
    <property type="project" value="Ensembl"/>
</dbReference>
<dbReference type="GO" id="GO:1904395">
    <property type="term" value="P:positive regulation of skeletal muscle acetylcholine-gated channel clustering"/>
    <property type="evidence" value="ECO:0007669"/>
    <property type="project" value="Ensembl"/>
</dbReference>
<dbReference type="GO" id="GO:0014911">
    <property type="term" value="P:positive regulation of smooth muscle cell migration"/>
    <property type="evidence" value="ECO:0007669"/>
    <property type="project" value="Ensembl"/>
</dbReference>
<dbReference type="GO" id="GO:1900026">
    <property type="term" value="P:positive regulation of substrate adhesion-dependent cell spreading"/>
    <property type="evidence" value="ECO:0000315"/>
    <property type="project" value="UniProtKB"/>
</dbReference>
<dbReference type="GO" id="GO:0098698">
    <property type="term" value="P:postsynaptic specialization assembly"/>
    <property type="evidence" value="ECO:0007669"/>
    <property type="project" value="Ensembl"/>
</dbReference>
<dbReference type="GO" id="GO:0072657">
    <property type="term" value="P:protein localization to membrane"/>
    <property type="evidence" value="ECO:0007669"/>
    <property type="project" value="Ensembl"/>
</dbReference>
<dbReference type="GO" id="GO:0038026">
    <property type="term" value="P:reelin-mediated signaling pathway"/>
    <property type="evidence" value="ECO:0007669"/>
    <property type="project" value="Ensembl"/>
</dbReference>
<dbReference type="GO" id="GO:0032956">
    <property type="term" value="P:regulation of actin cytoskeleton organization"/>
    <property type="evidence" value="ECO:0000314"/>
    <property type="project" value="UniProtKB"/>
</dbReference>
<dbReference type="GO" id="GO:0033628">
    <property type="term" value="P:regulation of cell adhesion mediated by integrin"/>
    <property type="evidence" value="ECO:0007669"/>
    <property type="project" value="Ensembl"/>
</dbReference>
<dbReference type="GO" id="GO:0008360">
    <property type="term" value="P:regulation of cell shape"/>
    <property type="evidence" value="ECO:0000315"/>
    <property type="project" value="UniProtKB"/>
</dbReference>
<dbReference type="GO" id="GO:0050773">
    <property type="term" value="P:regulation of dendrite development"/>
    <property type="evidence" value="ECO:0007669"/>
    <property type="project" value="Ensembl"/>
</dbReference>
<dbReference type="GO" id="GO:0043087">
    <property type="term" value="P:regulation of GTPase activity"/>
    <property type="evidence" value="ECO:0000314"/>
    <property type="project" value="UniProtKB"/>
</dbReference>
<dbReference type="GO" id="GO:1902531">
    <property type="term" value="P:regulation of intracellular signal transduction"/>
    <property type="evidence" value="ECO:0000314"/>
    <property type="project" value="UniProtKB"/>
</dbReference>
<dbReference type="GO" id="GO:0009966">
    <property type="term" value="P:regulation of signal transduction"/>
    <property type="evidence" value="ECO:0000314"/>
    <property type="project" value="CAFA"/>
</dbReference>
<dbReference type="GO" id="GO:2000404">
    <property type="term" value="P:regulation of T cell migration"/>
    <property type="evidence" value="ECO:0007669"/>
    <property type="project" value="Ensembl"/>
</dbReference>
<dbReference type="GO" id="GO:0006357">
    <property type="term" value="P:regulation of transcription by RNA polymerase II"/>
    <property type="evidence" value="ECO:0000304"/>
    <property type="project" value="ProtInc"/>
</dbReference>
<dbReference type="GO" id="GO:0061847">
    <property type="term" value="P:response to cholecystokinin"/>
    <property type="evidence" value="ECO:0007669"/>
    <property type="project" value="Ensembl"/>
</dbReference>
<dbReference type="GO" id="GO:0035728">
    <property type="term" value="P:response to hepatocyte growth factor"/>
    <property type="evidence" value="ECO:0007669"/>
    <property type="project" value="Ensembl"/>
</dbReference>
<dbReference type="GO" id="GO:0042542">
    <property type="term" value="P:response to hydrogen peroxide"/>
    <property type="evidence" value="ECO:0007669"/>
    <property type="project" value="Ensembl"/>
</dbReference>
<dbReference type="GO" id="GO:1901652">
    <property type="term" value="P:response to peptide"/>
    <property type="evidence" value="ECO:0007669"/>
    <property type="project" value="Ensembl"/>
</dbReference>
<dbReference type="GO" id="GO:0001878">
    <property type="term" value="P:response to yeast"/>
    <property type="evidence" value="ECO:0007669"/>
    <property type="project" value="Ensembl"/>
</dbReference>
<dbReference type="CDD" id="cd09926">
    <property type="entry name" value="SH2_CRK_like"/>
    <property type="match status" value="1"/>
</dbReference>
<dbReference type="CDD" id="cd11759">
    <property type="entry name" value="SH3_CRK_C"/>
    <property type="match status" value="1"/>
</dbReference>
<dbReference type="CDD" id="cd11758">
    <property type="entry name" value="SH3_CRK_N"/>
    <property type="match status" value="1"/>
</dbReference>
<dbReference type="DisProt" id="DP00748"/>
<dbReference type="DisProt" id="DP00973">
    <molecule id="P46108-2"/>
</dbReference>
<dbReference type="FunFam" id="2.30.30.40:FF:000065">
    <property type="entry name" value="adapter molecule crk isoform X1"/>
    <property type="match status" value="1"/>
</dbReference>
<dbReference type="FunFam" id="2.30.30.40:FF:000157">
    <property type="entry name" value="adapter molecule crk isoform X1"/>
    <property type="match status" value="1"/>
</dbReference>
<dbReference type="FunFam" id="3.30.505.10:FF:000026">
    <property type="entry name" value="adapter molecule crk isoform X1"/>
    <property type="match status" value="1"/>
</dbReference>
<dbReference type="Gene3D" id="3.30.505.10">
    <property type="entry name" value="SH2 domain"/>
    <property type="match status" value="1"/>
</dbReference>
<dbReference type="Gene3D" id="2.30.30.40">
    <property type="entry name" value="SH3 Domains"/>
    <property type="match status" value="2"/>
</dbReference>
<dbReference type="InterPro" id="IPR035458">
    <property type="entry name" value="CRK_SH3_C"/>
</dbReference>
<dbReference type="InterPro" id="IPR035457">
    <property type="entry name" value="CRK_SH3_N"/>
</dbReference>
<dbReference type="InterPro" id="IPR000980">
    <property type="entry name" value="SH2"/>
</dbReference>
<dbReference type="InterPro" id="IPR036860">
    <property type="entry name" value="SH2_dom_sf"/>
</dbReference>
<dbReference type="InterPro" id="IPR036028">
    <property type="entry name" value="SH3-like_dom_sf"/>
</dbReference>
<dbReference type="InterPro" id="IPR001452">
    <property type="entry name" value="SH3_domain"/>
</dbReference>
<dbReference type="InterPro" id="IPR051184">
    <property type="entry name" value="Tyrosine-phos_adapter"/>
</dbReference>
<dbReference type="PANTHER" id="PTHR19969:SF8">
    <property type="entry name" value="ADAPTER MOLECULE CRK"/>
    <property type="match status" value="1"/>
</dbReference>
<dbReference type="PANTHER" id="PTHR19969">
    <property type="entry name" value="SH2-SH3 ADAPTOR PROTEIN-RELATED"/>
    <property type="match status" value="1"/>
</dbReference>
<dbReference type="Pfam" id="PF00017">
    <property type="entry name" value="SH2"/>
    <property type="match status" value="1"/>
</dbReference>
<dbReference type="Pfam" id="PF00018">
    <property type="entry name" value="SH3_1"/>
    <property type="match status" value="1"/>
</dbReference>
<dbReference type="Pfam" id="PF07653">
    <property type="entry name" value="SH3_2"/>
    <property type="match status" value="1"/>
</dbReference>
<dbReference type="PRINTS" id="PR00401">
    <property type="entry name" value="SH2DOMAIN"/>
</dbReference>
<dbReference type="PRINTS" id="PR00452">
    <property type="entry name" value="SH3DOMAIN"/>
</dbReference>
<dbReference type="SMART" id="SM00252">
    <property type="entry name" value="SH2"/>
    <property type="match status" value="1"/>
</dbReference>
<dbReference type="SMART" id="SM00326">
    <property type="entry name" value="SH3"/>
    <property type="match status" value="2"/>
</dbReference>
<dbReference type="SUPFAM" id="SSF55550">
    <property type="entry name" value="SH2 domain"/>
    <property type="match status" value="1"/>
</dbReference>
<dbReference type="SUPFAM" id="SSF50044">
    <property type="entry name" value="SH3-domain"/>
    <property type="match status" value="2"/>
</dbReference>
<dbReference type="PROSITE" id="PS50001">
    <property type="entry name" value="SH2"/>
    <property type="match status" value="1"/>
</dbReference>
<dbReference type="PROSITE" id="PS50002">
    <property type="entry name" value="SH3"/>
    <property type="match status" value="2"/>
</dbReference>
<accession>P46108</accession>
<accession>A8MWE8</accession>
<accession>B0LPE8</accession>
<accession>D3DTH6</accession>
<accession>Q96GA9</accession>
<accession>Q96HJ0</accession>
<sequence>MAGNFDSEERSSWYWGRLSRQEAVALLQGQRHGVFLVRDSSTSPGDYVLSVSENSRVSHYIINSSGPRPPVPPSPAQPPPGVSPSRLRIGDQEFDSLPALLEFYKIHYLDTTTLIEPVSRSRQGSGVILRQEEAEYVRALFDFNGNDEEDLPFKKGDILRIRDKPEEQWWNAEDSEGKRGMIPVPYVEKYRPASASVSALIGGNQEGSHPQPLGGPEPGPYAQPSVNTPLPNLQNGPIYARVIQKRVPNAYDKTALALEVGELVKVTKINVSGQWEGECNGKRGHFPFTHVRLLDQQNPDEDFS</sequence>